<dbReference type="EC" id="5.6.2.4" evidence="7"/>
<dbReference type="EMBL" id="AL834463">
    <property type="protein sequence ID" value="CAD39122.1"/>
    <property type="molecule type" value="mRNA"/>
</dbReference>
<dbReference type="EMBL" id="AK315197">
    <property type="protein sequence ID" value="BAG37637.1"/>
    <property type="molecule type" value="mRNA"/>
</dbReference>
<dbReference type="EMBL" id="AL121965">
    <property type="status" value="NOT_ANNOTATED_CDS"/>
    <property type="molecule type" value="Genomic_DNA"/>
</dbReference>
<dbReference type="EMBL" id="AL133338">
    <property type="status" value="NOT_ANNOTATED_CDS"/>
    <property type="molecule type" value="Genomic_DNA"/>
</dbReference>
<dbReference type="EMBL" id="AL356122">
    <property type="status" value="NOT_ANNOTATED_CDS"/>
    <property type="molecule type" value="Genomic_DNA"/>
</dbReference>
<dbReference type="EMBL" id="AL591585">
    <property type="status" value="NOT_ANNOTATED_CDS"/>
    <property type="molecule type" value="Genomic_DNA"/>
</dbReference>
<dbReference type="EMBL" id="Z86062">
    <property type="status" value="NOT_ANNOTATED_CDS"/>
    <property type="molecule type" value="Genomic_DNA"/>
</dbReference>
<dbReference type="EMBL" id="CH471051">
    <property type="protein sequence ID" value="EAW48449.1"/>
    <property type="molecule type" value="Genomic_DNA"/>
</dbReference>
<dbReference type="EMBL" id="BC050681">
    <property type="protein sequence ID" value="AAH50681.1"/>
    <property type="molecule type" value="mRNA"/>
</dbReference>
<dbReference type="EMBL" id="BC125211">
    <property type="protein sequence ID" value="AAI25212.1"/>
    <property type="molecule type" value="mRNA"/>
</dbReference>
<dbReference type="EMBL" id="BC125212">
    <property type="protein sequence ID" value="AAI25213.1"/>
    <property type="molecule type" value="mRNA"/>
</dbReference>
<dbReference type="EMBL" id="BC026066">
    <property type="protein sequence ID" value="AAH26066.1"/>
    <property type="molecule type" value="mRNA"/>
</dbReference>
<dbReference type="EMBL" id="AY013288">
    <property type="protein sequence ID" value="AAG45474.1"/>
    <property type="status" value="ALT_FRAME"/>
    <property type="molecule type" value="mRNA"/>
</dbReference>
<dbReference type="EMBL" id="AJ223948">
    <property type="protein sequence ID" value="CAA11679.1"/>
    <property type="status" value="ALT_SEQ"/>
    <property type="molecule type" value="mRNA"/>
</dbReference>
<dbReference type="CCDS" id="CCDS5046.1">
    <molecule id="Q8N3C0-1"/>
</dbReference>
<dbReference type="CCDS" id="CCDS5047.1">
    <molecule id="Q8N3C0-3"/>
</dbReference>
<dbReference type="CCDS" id="CCDS75497.1">
    <molecule id="Q8N3C0-4"/>
</dbReference>
<dbReference type="RefSeq" id="NP_001271200.1">
    <molecule id="Q8N3C0-4"/>
    <property type="nucleotide sequence ID" value="NM_001284271.2"/>
</dbReference>
<dbReference type="RefSeq" id="NP_006819.2">
    <molecule id="Q8N3C0-1"/>
    <property type="nucleotide sequence ID" value="NM_006828.4"/>
</dbReference>
<dbReference type="RefSeq" id="NP_071374.1">
    <molecule id="Q8N3C0-3"/>
    <property type="nucleotide sequence ID" value="NM_022091.5"/>
</dbReference>
<dbReference type="PDB" id="6YXQ">
    <property type="method" value="X-ray"/>
    <property type="resolution" value="2.70 A"/>
    <property type="chains" value="A=1-207"/>
</dbReference>
<dbReference type="PDB" id="8ALZ">
    <property type="method" value="EM"/>
    <property type="resolution" value="3.40 A"/>
    <property type="chains" value="B=401-2202"/>
</dbReference>
<dbReference type="PDBsum" id="6YXQ"/>
<dbReference type="PDBsum" id="8ALZ"/>
<dbReference type="EMDB" id="EMD-15521"/>
<dbReference type="SMR" id="Q8N3C0"/>
<dbReference type="BioGRID" id="116170">
    <property type="interactions" value="234"/>
</dbReference>
<dbReference type="ComplexPortal" id="CPX-6641">
    <property type="entry name" value="ASCC DNA alkylation repair complex"/>
</dbReference>
<dbReference type="ComplexPortal" id="CPX-6642">
    <property type="entry name" value="RQT ribosome-associated quality control trigger complex"/>
</dbReference>
<dbReference type="CORUM" id="Q8N3C0"/>
<dbReference type="FunCoup" id="Q8N3C0">
    <property type="interactions" value="3085"/>
</dbReference>
<dbReference type="IntAct" id="Q8N3C0">
    <property type="interactions" value="104"/>
</dbReference>
<dbReference type="MINT" id="Q8N3C0"/>
<dbReference type="STRING" id="9606.ENSP00000358159"/>
<dbReference type="CarbonylDB" id="Q8N3C0"/>
<dbReference type="GlyGen" id="Q8N3C0">
    <property type="glycosylation" value="5 sites, 3 N-linked glycans (3 sites), 1 O-linked glycan (1 site)"/>
</dbReference>
<dbReference type="iPTMnet" id="Q8N3C0"/>
<dbReference type="MetOSite" id="Q8N3C0"/>
<dbReference type="PhosphoSitePlus" id="Q8N3C0"/>
<dbReference type="SwissPalm" id="Q8N3C0"/>
<dbReference type="BioMuta" id="ASCC3"/>
<dbReference type="DMDM" id="158518649"/>
<dbReference type="jPOST" id="Q8N3C0"/>
<dbReference type="MassIVE" id="Q8N3C0"/>
<dbReference type="PaxDb" id="9606-ENSP00000358159"/>
<dbReference type="PeptideAtlas" id="Q8N3C0"/>
<dbReference type="ProteomicsDB" id="71786">
    <molecule id="Q8N3C0-1"/>
</dbReference>
<dbReference type="ProteomicsDB" id="71787">
    <molecule id="Q8N3C0-3"/>
</dbReference>
<dbReference type="ProteomicsDB" id="71788">
    <molecule id="Q8N3C0-4"/>
</dbReference>
<dbReference type="Pumba" id="Q8N3C0"/>
<dbReference type="Antibodypedia" id="32044">
    <property type="antibodies" value="93 antibodies from 19 providers"/>
</dbReference>
<dbReference type="DNASU" id="10973"/>
<dbReference type="Ensembl" id="ENST00000369143.2">
    <molecule id="Q8N3C0-3"/>
    <property type="protein sequence ID" value="ENSP00000358139.2"/>
    <property type="gene ID" value="ENSG00000112249.14"/>
</dbReference>
<dbReference type="Ensembl" id="ENST00000369162.7">
    <molecule id="Q8N3C0-1"/>
    <property type="protein sequence ID" value="ENSP00000358159.2"/>
    <property type="gene ID" value="ENSG00000112249.14"/>
</dbReference>
<dbReference type="Ensembl" id="ENST00000522650.5">
    <molecule id="Q8N3C0-4"/>
    <property type="protein sequence ID" value="ENSP00000430769.1"/>
    <property type="gene ID" value="ENSG00000112249.14"/>
</dbReference>
<dbReference type="GeneID" id="10973"/>
<dbReference type="KEGG" id="hsa:10973"/>
<dbReference type="MANE-Select" id="ENST00000369162.7">
    <property type="protein sequence ID" value="ENSP00000358159.2"/>
    <property type="RefSeq nucleotide sequence ID" value="NM_006828.4"/>
    <property type="RefSeq protein sequence ID" value="NP_006819.2"/>
</dbReference>
<dbReference type="UCSC" id="uc003pqk.5">
    <molecule id="Q8N3C0-1"/>
    <property type="organism name" value="human"/>
</dbReference>
<dbReference type="AGR" id="HGNC:18697"/>
<dbReference type="CTD" id="10973"/>
<dbReference type="DisGeNET" id="10973"/>
<dbReference type="GeneCards" id="ASCC3"/>
<dbReference type="HGNC" id="HGNC:18697">
    <property type="gene designation" value="ASCC3"/>
</dbReference>
<dbReference type="HPA" id="ENSG00000112249">
    <property type="expression patterns" value="Low tissue specificity"/>
</dbReference>
<dbReference type="MalaCards" id="ASCC3"/>
<dbReference type="MIM" id="614217">
    <property type="type" value="gene"/>
</dbReference>
<dbReference type="MIM" id="620700">
    <property type="type" value="phenotype"/>
</dbReference>
<dbReference type="neXtProt" id="NX_Q8N3C0"/>
<dbReference type="OpenTargets" id="ENSG00000112249"/>
<dbReference type="PharmGKB" id="PA134890913"/>
<dbReference type="VEuPathDB" id="HostDB:ENSG00000112249"/>
<dbReference type="eggNOG" id="KOG0952">
    <property type="taxonomic scope" value="Eukaryota"/>
</dbReference>
<dbReference type="GeneTree" id="ENSGT00940000155377"/>
<dbReference type="HOGENOM" id="CLU_000335_2_1_1"/>
<dbReference type="InParanoid" id="Q8N3C0"/>
<dbReference type="OMA" id="MCSATEF"/>
<dbReference type="OrthoDB" id="5575at2759"/>
<dbReference type="PAN-GO" id="Q8N3C0">
    <property type="GO annotations" value="2 GO annotations based on evolutionary models"/>
</dbReference>
<dbReference type="PhylomeDB" id="Q8N3C0"/>
<dbReference type="TreeFam" id="TF105778"/>
<dbReference type="PathwayCommons" id="Q8N3C0"/>
<dbReference type="Reactome" id="R-HSA-112126">
    <property type="pathway name" value="ALKBH3 mediated reversal of alkylation damage"/>
</dbReference>
<dbReference type="SignaLink" id="Q8N3C0"/>
<dbReference type="BioGRID-ORCS" id="10973">
    <property type="hits" value="193 hits in 1172 CRISPR screens"/>
</dbReference>
<dbReference type="CD-CODE" id="232F8A39">
    <property type="entry name" value="P-body"/>
</dbReference>
<dbReference type="CD-CODE" id="804901D1">
    <property type="entry name" value="Nuclear speckle"/>
</dbReference>
<dbReference type="CD-CODE" id="DEE660B4">
    <property type="entry name" value="Stress granule"/>
</dbReference>
<dbReference type="ChiTaRS" id="ASCC3">
    <property type="organism name" value="human"/>
</dbReference>
<dbReference type="GeneWiki" id="ASCC3"/>
<dbReference type="GenomeRNAi" id="10973"/>
<dbReference type="Pharos" id="Q8N3C0">
    <property type="development level" value="Tbio"/>
</dbReference>
<dbReference type="PRO" id="PR:Q8N3C0"/>
<dbReference type="Proteomes" id="UP000005640">
    <property type="component" value="Chromosome 6"/>
</dbReference>
<dbReference type="RNAct" id="Q8N3C0">
    <property type="molecule type" value="protein"/>
</dbReference>
<dbReference type="Bgee" id="ENSG00000112249">
    <property type="expression patterns" value="Expressed in decidua and 194 other cell types or tissues"/>
</dbReference>
<dbReference type="ExpressionAtlas" id="Q8N3C0">
    <property type="expression patterns" value="baseline and differential"/>
</dbReference>
<dbReference type="GO" id="GO:0005829">
    <property type="term" value="C:cytosol"/>
    <property type="evidence" value="ECO:0000314"/>
    <property type="project" value="HPA"/>
</dbReference>
<dbReference type="GO" id="GO:0022626">
    <property type="term" value="C:cytosolic ribosome"/>
    <property type="evidence" value="ECO:0000314"/>
    <property type="project" value="UniProt"/>
</dbReference>
<dbReference type="GO" id="GO:1990391">
    <property type="term" value="C:DNA repair complex"/>
    <property type="evidence" value="ECO:0000353"/>
    <property type="project" value="ComplexPortal"/>
</dbReference>
<dbReference type="GO" id="GO:0016020">
    <property type="term" value="C:membrane"/>
    <property type="evidence" value="ECO:0007005"/>
    <property type="project" value="UniProtKB"/>
</dbReference>
<dbReference type="GO" id="GO:0016607">
    <property type="term" value="C:nuclear speck"/>
    <property type="evidence" value="ECO:0007669"/>
    <property type="project" value="UniProtKB-SubCell"/>
</dbReference>
<dbReference type="GO" id="GO:0005654">
    <property type="term" value="C:nucleoplasm"/>
    <property type="evidence" value="ECO:0000304"/>
    <property type="project" value="Reactome"/>
</dbReference>
<dbReference type="GO" id="GO:0005634">
    <property type="term" value="C:nucleus"/>
    <property type="evidence" value="ECO:0000314"/>
    <property type="project" value="UniProtKB"/>
</dbReference>
<dbReference type="GO" id="GO:0180022">
    <property type="term" value="C:RQC-trigger complex"/>
    <property type="evidence" value="ECO:0000314"/>
    <property type="project" value="UniProtKB"/>
</dbReference>
<dbReference type="GO" id="GO:0043138">
    <property type="term" value="F:3'-5' DNA helicase activity"/>
    <property type="evidence" value="ECO:0000314"/>
    <property type="project" value="UniProtKB"/>
</dbReference>
<dbReference type="GO" id="GO:0005524">
    <property type="term" value="F:ATP binding"/>
    <property type="evidence" value="ECO:0007669"/>
    <property type="project" value="UniProtKB-KW"/>
</dbReference>
<dbReference type="GO" id="GO:0016887">
    <property type="term" value="F:ATP hydrolysis activity"/>
    <property type="evidence" value="ECO:0000314"/>
    <property type="project" value="UniProtKB"/>
</dbReference>
<dbReference type="GO" id="GO:0003723">
    <property type="term" value="F:RNA binding"/>
    <property type="evidence" value="ECO:0007005"/>
    <property type="project" value="UniProtKB"/>
</dbReference>
<dbReference type="GO" id="GO:0006307">
    <property type="term" value="P:DNA alkylation repair"/>
    <property type="evidence" value="ECO:0000314"/>
    <property type="project" value="UniProtKB"/>
</dbReference>
<dbReference type="GO" id="GO:0072344">
    <property type="term" value="P:rescue of stalled ribosome"/>
    <property type="evidence" value="ECO:0000314"/>
    <property type="project" value="UniProtKB"/>
</dbReference>
<dbReference type="GO" id="GO:0032790">
    <property type="term" value="P:ribosome disassembly"/>
    <property type="evidence" value="ECO:0000314"/>
    <property type="project" value="UniProtKB"/>
</dbReference>
<dbReference type="GO" id="GO:1990116">
    <property type="term" value="P:ribosome-associated ubiquitin-dependent protein catabolic process"/>
    <property type="evidence" value="ECO:0000315"/>
    <property type="project" value="UniProtKB"/>
</dbReference>
<dbReference type="CDD" id="cd18020">
    <property type="entry name" value="DEXHc_ASCC3_1"/>
    <property type="match status" value="1"/>
</dbReference>
<dbReference type="CDD" id="cd18022">
    <property type="entry name" value="DEXHc_ASCC3_2"/>
    <property type="match status" value="1"/>
</dbReference>
<dbReference type="CDD" id="cd18795">
    <property type="entry name" value="SF2_C_Ski2"/>
    <property type="match status" value="2"/>
</dbReference>
<dbReference type="FunFam" id="3.40.50.300:FF:000198">
    <property type="entry name" value="Activating signal cointegrator 1 complex subunit"/>
    <property type="match status" value="1"/>
</dbReference>
<dbReference type="FunFam" id="1.10.3380.10:FF:000002">
    <property type="entry name" value="Activating signal cointegrator 1 complex subunit 3"/>
    <property type="match status" value="1"/>
</dbReference>
<dbReference type="FunFam" id="3.40.50.300:FF:000231">
    <property type="entry name" value="Activating signal cointegrator 1 complex subunit 3"/>
    <property type="match status" value="1"/>
</dbReference>
<dbReference type="FunFam" id="1.10.150.20:FF:000028">
    <property type="entry name" value="activating signal cointegrator 1 complex subunit 3"/>
    <property type="match status" value="1"/>
</dbReference>
<dbReference type="FunFam" id="2.60.40.150:FF:000113">
    <property type="entry name" value="activating signal cointegrator 1 complex subunit 3"/>
    <property type="match status" value="1"/>
</dbReference>
<dbReference type="FunFam" id="2.60.40.150:FF:000004">
    <property type="entry name" value="RNA helicase, activating signal cointegrator 1"/>
    <property type="match status" value="1"/>
</dbReference>
<dbReference type="FunFam" id="3.40.50.300:FF:000102">
    <property type="entry name" value="RNA helicase, activating signal cointegrator 1"/>
    <property type="match status" value="1"/>
</dbReference>
<dbReference type="FunFam" id="1.10.10.10:FF:000012">
    <property type="entry name" value="U5 small nuclear ribonucleoprotein helicase"/>
    <property type="match status" value="1"/>
</dbReference>
<dbReference type="FunFam" id="1.10.10.10:FF:000024">
    <property type="entry name" value="U5 small nuclear ribonucleoprotein helicase"/>
    <property type="match status" value="1"/>
</dbReference>
<dbReference type="FunFam" id="1.10.3380.10:FF:000001">
    <property type="entry name" value="U5 small nuclear ribonucleoprotein helicase"/>
    <property type="match status" value="1"/>
</dbReference>
<dbReference type="FunFam" id="3.40.50.300:FF:000062">
    <property type="entry name" value="U5 small nuclear ribonucleoprotein helicase"/>
    <property type="match status" value="1"/>
</dbReference>
<dbReference type="Gene3D" id="1.10.150.20">
    <property type="entry name" value="5' to 3' exonuclease, C-terminal subdomain"/>
    <property type="match status" value="1"/>
</dbReference>
<dbReference type="Gene3D" id="2.60.40.150">
    <property type="entry name" value="C2 domain"/>
    <property type="match status" value="2"/>
</dbReference>
<dbReference type="Gene3D" id="3.40.50.300">
    <property type="entry name" value="P-loop containing nucleotide triphosphate hydrolases"/>
    <property type="match status" value="4"/>
</dbReference>
<dbReference type="Gene3D" id="1.10.3380.10">
    <property type="entry name" value="Sec63 N-terminal domain-like domain"/>
    <property type="match status" value="2"/>
</dbReference>
<dbReference type="Gene3D" id="1.10.10.10">
    <property type="entry name" value="Winged helix-like DNA-binding domain superfamily/Winged helix DNA-binding domain"/>
    <property type="match status" value="2"/>
</dbReference>
<dbReference type="InterPro" id="IPR003593">
    <property type="entry name" value="AAA+_ATPase"/>
</dbReference>
<dbReference type="InterPro" id="IPR035892">
    <property type="entry name" value="C2_domain_sf"/>
</dbReference>
<dbReference type="InterPro" id="IPR011545">
    <property type="entry name" value="DEAD/DEAH_box_helicase_dom"/>
</dbReference>
<dbReference type="InterPro" id="IPR050474">
    <property type="entry name" value="Hel308_SKI2-like"/>
</dbReference>
<dbReference type="InterPro" id="IPR014001">
    <property type="entry name" value="Helicase_ATP-bd"/>
</dbReference>
<dbReference type="InterPro" id="IPR001650">
    <property type="entry name" value="Helicase_C-like"/>
</dbReference>
<dbReference type="InterPro" id="IPR014756">
    <property type="entry name" value="Ig_E-set"/>
</dbReference>
<dbReference type="InterPro" id="IPR027417">
    <property type="entry name" value="P-loop_NTPase"/>
</dbReference>
<dbReference type="InterPro" id="IPR004179">
    <property type="entry name" value="Sec63-dom"/>
</dbReference>
<dbReference type="InterPro" id="IPR036388">
    <property type="entry name" value="WH-like_DNA-bd_sf"/>
</dbReference>
<dbReference type="InterPro" id="IPR036390">
    <property type="entry name" value="WH_DNA-bd_sf"/>
</dbReference>
<dbReference type="PANTHER" id="PTHR47961:SF13">
    <property type="entry name" value="ACTIVATING SIGNAL COINTEGRATOR 1 COMPLEX SUBUNIT 3"/>
    <property type="match status" value="1"/>
</dbReference>
<dbReference type="PANTHER" id="PTHR47961">
    <property type="entry name" value="DNA POLYMERASE THETA, PUTATIVE (AFU_ORTHOLOGUE AFUA_1G05260)-RELATED"/>
    <property type="match status" value="1"/>
</dbReference>
<dbReference type="Pfam" id="PF00270">
    <property type="entry name" value="DEAD"/>
    <property type="match status" value="2"/>
</dbReference>
<dbReference type="Pfam" id="PF00271">
    <property type="entry name" value="Helicase_C"/>
    <property type="match status" value="2"/>
</dbReference>
<dbReference type="Pfam" id="PF02889">
    <property type="entry name" value="Sec63"/>
    <property type="match status" value="2"/>
</dbReference>
<dbReference type="Pfam" id="PF23445">
    <property type="entry name" value="SNRNP200_wHTH"/>
    <property type="match status" value="2"/>
</dbReference>
<dbReference type="PIRSF" id="PIRSF039073">
    <property type="entry name" value="BRR2"/>
    <property type="match status" value="1"/>
</dbReference>
<dbReference type="SMART" id="SM00382">
    <property type="entry name" value="AAA"/>
    <property type="match status" value="2"/>
</dbReference>
<dbReference type="SMART" id="SM00487">
    <property type="entry name" value="DEXDc"/>
    <property type="match status" value="2"/>
</dbReference>
<dbReference type="SMART" id="SM00490">
    <property type="entry name" value="HELICc"/>
    <property type="match status" value="2"/>
</dbReference>
<dbReference type="SMART" id="SM00973">
    <property type="entry name" value="Sec63"/>
    <property type="match status" value="2"/>
</dbReference>
<dbReference type="SUPFAM" id="SSF81296">
    <property type="entry name" value="E set domains"/>
    <property type="match status" value="1"/>
</dbReference>
<dbReference type="SUPFAM" id="SSF52540">
    <property type="entry name" value="P-loop containing nucleoside triphosphate hydrolases"/>
    <property type="match status" value="4"/>
</dbReference>
<dbReference type="SUPFAM" id="SSF158702">
    <property type="entry name" value="Sec63 N-terminal domain-like"/>
    <property type="match status" value="2"/>
</dbReference>
<dbReference type="SUPFAM" id="SSF46785">
    <property type="entry name" value="Winged helix' DNA-binding domain"/>
    <property type="match status" value="2"/>
</dbReference>
<dbReference type="PROSITE" id="PS51192">
    <property type="entry name" value="HELICASE_ATP_BIND_1"/>
    <property type="match status" value="2"/>
</dbReference>
<dbReference type="PROSITE" id="PS51194">
    <property type="entry name" value="HELICASE_CTER"/>
    <property type="match status" value="2"/>
</dbReference>
<keyword id="KW-0002">3D-structure</keyword>
<keyword id="KW-0007">Acetylation</keyword>
<keyword id="KW-0025">Alternative splicing</keyword>
<keyword id="KW-0067">ATP-binding</keyword>
<keyword id="KW-0175">Coiled coil</keyword>
<keyword id="KW-0963">Cytoplasm</keyword>
<keyword id="KW-0903">Direct protein sequencing</keyword>
<keyword id="KW-0227">DNA damage</keyword>
<keyword id="KW-0234">DNA repair</keyword>
<keyword id="KW-0347">Helicase</keyword>
<keyword id="KW-0378">Hydrolase</keyword>
<keyword id="KW-0991">Intellectual disability</keyword>
<keyword id="KW-0413">Isomerase</keyword>
<keyword id="KW-0547">Nucleotide-binding</keyword>
<keyword id="KW-0539">Nucleus</keyword>
<keyword id="KW-0597">Phosphoprotein</keyword>
<keyword id="KW-1267">Proteomics identification</keyword>
<keyword id="KW-1185">Reference proteome</keyword>
<keyword id="KW-0677">Repeat</keyword>
<organism>
    <name type="scientific">Homo sapiens</name>
    <name type="common">Human</name>
    <dbReference type="NCBI Taxonomy" id="9606"/>
    <lineage>
        <taxon>Eukaryota</taxon>
        <taxon>Metazoa</taxon>
        <taxon>Chordata</taxon>
        <taxon>Craniata</taxon>
        <taxon>Vertebrata</taxon>
        <taxon>Euteleostomi</taxon>
        <taxon>Mammalia</taxon>
        <taxon>Eutheria</taxon>
        <taxon>Euarchontoglires</taxon>
        <taxon>Primates</taxon>
        <taxon>Haplorrhini</taxon>
        <taxon>Catarrhini</taxon>
        <taxon>Hominidae</taxon>
        <taxon>Homo</taxon>
    </lineage>
</organism>
<protein>
    <recommendedName>
        <fullName>Activating signal cointegrator 1 complex subunit 3</fullName>
        <ecNumber evidence="7">5.6.2.4</ecNumber>
    </recommendedName>
    <alternativeName>
        <fullName evidence="17">ASC-1 complex subunit p200</fullName>
        <shortName>ASC1p200</shortName>
    </alternativeName>
    <alternativeName>
        <fullName>Helicase, ATP binding 1</fullName>
    </alternativeName>
    <alternativeName>
        <fullName evidence="17">Trip4 complex subunit p200</fullName>
    </alternativeName>
</protein>
<sequence>MALPRLTGALRSFSNVTKQDNYNEEVADLKIKRSKLHEQVLDLGLTWKKIIKFLNEKLEKSKMQSINEDLKDILHAAKQIVGTDNGREAIESGAAFLFMTFHLKDSVGHKETKAIKQMFGPFPSSSATAACNATNRIISHFSQDDLTALVQMTEKEHGDRVFFGKNLAFSFDMHDLDHFDELPINGETQKTISLDYKKFLNEHLQEACTPELKPVEKTNGSFLWCEVEKYLNSTLKEMTEVPRVEDLCCTLYDMLASIKSGDELQDELFELLGPEGLELIEKLLQNRITIVDRFLNSSNDHRFQALQDNCKKILGENAKPNYGCQVTIQSEQEKQLMKQYRREEKRIARREKKAGEDLEVSEGLMCFDPKELRIQREQALLNARSVPILSRQRDADVEKIHYPHVYDSQAEAMKTSAFIAGAKMILPEGIQRENNKLYEEVRIPYSEPMPLSFEEKPVYIQDLDEIGQLAFKGMKRLNRIQSIVFETAYNTNENMLICAPTGAGKTNIAMLTVLHEIRQHFQQGVIKKNEFKIVYVAPMKALAAEMTDYFSRRLEPLGIIVKELTGDMQLSKSEILRTQMLVTTPEKWDVVTRKSVGDVALSQIVRLLILDEVHLLHEDRGPVLESIVARTLRQVESTQSMIRILGLSATLPNYLDVATFLHVNPYIGLFFFDGRFRPVPLGQTFLGIKCANKMQQLNNMDEVCYENVLKQVKAGHQVMVFVHARNATVRTAMSLIERAKNCGHIPFFFPTQGHDYVLAEKQVQRSRNKQVRELFPDGFSIHHAGMLRQDRNLVENLFSNGHIKVLVCTATLAWGVNLPAHAVIIKGTQIYAAKRGSFVDLGILDVMQIFGRAGRPQFDKFGEGIIITTHDKLSHYLTLLTQRNPIESQFLESLADNLNAEIALGTVTNVEEAVKWISYTYLYVRMRANPLAYGISHKAYQIDPTLRKHREQLVIEVGRKLDKAQMIRFEERTGYFSSTDLGRTASHYYIKYNTIETFNELFDAHKTEGDIFAIVSKAEEFDQIKVREEEIEELDTLLSNFCELSTPGGVENSYGKINILLQTYISRGEMDSFSLISDSAYVAQNAARIVRALFEIALRKRWPTMTYRLLNLSKVIDKRLWGWASPLRQFSILPPHILTRLEEKKLTVDKLKDMRKDEIGHILHHVNIGLKVKQCVHQIPSVMMEASIQPITRTVLRVTLSIYADFTWNDQVHGTVGEPWWIWVEDPTNDHIYHSEYFLALKKQVISKEAQLLVFTIPIFEPLPSQYYIRAVSDRWLGAEAVCIINFQHLILPERHPPHTELLDLQPLPITALGCKAYEALYNFSHFNPVQTQIFHTLYHTDCNVLLGAPTGSGKTVAAELAIFRVFNKYPTSKAVYIAPLKALVRERMDDWKVRIEEKLGKKVIELTGDVTPDMKSIAKADLIVTTPEKWDGVSRSWQNRNYVQQVTILIIDEIHLLGEERGPVLEVIVSRTNFISSHTEKPVRIVGLSTALANARDLADWLNIKQMGLFNFRPSVRPVPLEVHIQGFPGQHYCPRMASMNKPAFQAIRSHSPAKPVLIFVSSRRQTRLTALELIAFLATEEDPKQWLNMDEREMENIIATVRDSNLKLTLAFGIGMHHAGLHERDRKTVEELFVNCKVQVLIATSTLAWGVNFPAHLVIIKGTEYYDGKTRRYVDFPITDVLQMMGRAGRPQFDDQGKAVILVHDIKKDFYKKFLYEPFPVESSLLGVLSDHLNAEIAGGTITSKQDALDYITWTYFFRRLIMNPSYYNLGDVSHDSVNKFLSHLIEKSLIELELSYCIEIGEDNRSIEPLTYGRIASYYYLKHQTVKMFKDRLKPECSTEELLSILSDAEEYTDLPVRHNEDHMNSELAKCLPIESNPHSFDSPHTKAHLLLQAHLSRAMLPCPDYDTDTKTVLDQALRVCQAMLDVAANQGWLVTVLNITNLIQMVIQGRWLKDSSLLTLPNIENHHLHLFKKWKPIMKGPHARGRTSIESLPELIHACGGKDHVFSSMVESELHAAKTKQAWNFLSHLPVINVGISVKGSWDDLVEGHNELSVSTLTADKRDDNKWIKLHADQEYVLQVSLQRVHFGFHKGKPESCAVTPRFPKSKDEGWFLILGEVDKRELIALKRVGYIRNHHVASLSFYTPEIPGRYIYTLYFMSDCYLGLDQQYDIYLNVTQASLSAQVNTKVSDSLTDLALK</sequence>
<gene>
    <name type="primary">ASCC3</name>
    <name type="synonym">HELIC1</name>
    <name evidence="20" type="synonym">RQT2</name>
</gene>
<proteinExistence type="evidence at protein level"/>
<accession>Q8N3C0</accession>
<accession>E7EW23</accession>
<accession>O43738</accession>
<accession>Q4G1A0</accession>
<accession>Q5VTN2</accession>
<accession>Q9H1I9</accession>
<accession>Q9H5A2</accession>
<accession>Q9NTR0</accession>
<feature type="chain" id="PRO_0000102093" description="Activating signal cointegrator 1 complex subunit 3">
    <location>
        <begin position="1"/>
        <end position="2202"/>
    </location>
</feature>
<feature type="domain" description="Helicase ATP-binding 1" evidence="2">
    <location>
        <begin position="486"/>
        <end position="669"/>
    </location>
</feature>
<feature type="domain" description="Helicase C-terminal 1" evidence="3">
    <location>
        <begin position="728"/>
        <end position="914"/>
    </location>
</feature>
<feature type="domain" description="SEC63 1">
    <location>
        <begin position="978"/>
        <end position="1287"/>
    </location>
</feature>
<feature type="domain" description="Helicase ATP-binding 2" evidence="2">
    <location>
        <begin position="1336"/>
        <end position="1511"/>
    </location>
</feature>
<feature type="domain" description="Helicase C-terminal 2" evidence="3">
    <location>
        <begin position="1544"/>
        <end position="1739"/>
    </location>
</feature>
<feature type="domain" description="SEC63 2">
    <location>
        <begin position="1812"/>
        <end position="2176"/>
    </location>
</feature>
<feature type="region of interest" description="Required for interaction with ASCC2" evidence="10">
    <location>
        <begin position="1"/>
        <end position="400"/>
    </location>
</feature>
<feature type="coiled-coil region" evidence="1">
    <location>
        <begin position="18"/>
        <end position="79"/>
    </location>
</feature>
<feature type="coiled-coil region" evidence="1">
    <location>
        <begin position="328"/>
        <end position="356"/>
    </location>
</feature>
<feature type="short sequence motif" description="DEVH box">
    <location>
        <begin position="611"/>
        <end position="614"/>
    </location>
</feature>
<feature type="short sequence motif" description="DEIH box">
    <location>
        <begin position="1453"/>
        <end position="1456"/>
    </location>
</feature>
<feature type="binding site" evidence="2">
    <location>
        <begin position="499"/>
        <end position="506"/>
    </location>
    <ligand>
        <name>ATP</name>
        <dbReference type="ChEBI" id="CHEBI:30616"/>
    </ligand>
</feature>
<feature type="binding site" evidence="2">
    <location>
        <begin position="1349"/>
        <end position="1356"/>
    </location>
    <ligand>
        <name>ATP</name>
        <dbReference type="ChEBI" id="CHEBI:30616"/>
    </ligand>
</feature>
<feature type="modified residue" description="Phosphoserine" evidence="24">
    <location>
        <position position="12"/>
    </location>
</feature>
<feature type="modified residue" description="N6-acetyllysine" evidence="23">
    <location>
        <position position="572"/>
    </location>
</feature>
<feature type="modified residue" description="Phosphoserine" evidence="24">
    <location>
        <position position="2195"/>
    </location>
</feature>
<feature type="splice variant" id="VSP_042955" description="In isoform 2." evidence="18 19">
    <original>VGTDNGREAIESGAAFLFMTFHLKDSVGHKE</original>
    <variation>EVNCPFQKRRLDGKEEDEKMSRASDRFRGLR</variation>
    <location>
        <begin position="81"/>
        <end position="111"/>
    </location>
</feature>
<feature type="splice variant" id="VSP_042956" description="In isoform 2." evidence="18 19">
    <location>
        <begin position="112"/>
        <end position="2202"/>
    </location>
</feature>
<feature type="splice variant" id="VSP_042957" description="In isoform 3." evidence="19">
    <original>MVFVHARNATVRT</original>
    <variation>HLFYLLLHLFICF</variation>
    <location>
        <begin position="719"/>
        <end position="731"/>
    </location>
</feature>
<feature type="splice variant" id="VSP_042958" description="In isoform 3." evidence="19">
    <location>
        <begin position="732"/>
        <end position="2202"/>
    </location>
</feature>
<feature type="sequence variant" id="VAR_034859" description="In dbSNP:rs9390698." evidence="5">
    <original>L</original>
    <variation>F</variation>
    <location>
        <position position="146"/>
    </location>
</feature>
<feature type="sequence variant" id="VAR_049339" description="In dbSNP:rs6918004.">
    <original>E</original>
    <variation>K</variation>
    <location>
        <position position="344"/>
    </location>
</feature>
<feature type="sequence variant" id="VAR_049340" description="In dbSNP:rs7750940.">
    <original>N</original>
    <variation>S</variation>
    <location>
        <position position="478"/>
    </location>
</feature>
<feature type="sequence variant" id="VAR_061212" description="In dbSNP:rs57534235.">
    <original>S</original>
    <variation>C</variation>
    <location>
        <position position="1016"/>
    </location>
</feature>
<feature type="sequence variant" id="VAR_034860" description="In dbSNP:rs9497983.">
    <original>V</original>
    <variation>I</variation>
    <location>
        <position position="1050"/>
    </location>
</feature>
<feature type="sequence variant" id="VAR_089330" description="In MRT81; uncertain significance; dbSNP:rs372947820." evidence="14">
    <location>
        <begin position="1211"/>
        <end position="2202"/>
    </location>
</feature>
<feature type="sequence variant" id="VAR_049341" description="In dbSNP:rs17246013.">
    <original>V</original>
    <variation>A</variation>
    <location>
        <position position="1425"/>
    </location>
</feature>
<feature type="sequence variant" id="VAR_089331" description="In MRT81; uncertain significance; dbSNP:rs1483972453." evidence="14">
    <original>T</original>
    <variation>M</variation>
    <location>
        <position position="1427"/>
    </location>
</feature>
<feature type="sequence variant" id="VAR_089332" description="In MRT81; uncertain significance; dbSNP:rs1051651433." evidence="14">
    <original>R</original>
    <variation>Q</variation>
    <location>
        <position position="1472"/>
    </location>
</feature>
<feature type="sequence variant" id="VAR_049342" description="In dbSNP:rs17305382.">
    <original>R</original>
    <variation>T</variation>
    <location>
        <position position="1497"/>
    </location>
</feature>
<feature type="sequence variant" id="VAR_089333" description="In MRT81; uncertain significance; dbSNP:rs148742449." evidence="14">
    <original>R</original>
    <variation>H</variation>
    <location>
        <position position="1518"/>
    </location>
</feature>
<feature type="sequence variant" id="VAR_089334" description="In MRT81; uncertain significance; dbSNP:rs1414695401." evidence="6">
    <original>S</original>
    <variation>P</variation>
    <location>
        <position position="1564"/>
    </location>
</feature>
<feature type="sequence variant" id="VAR_089335" description="In MRT81; uncertain significance; dbSNP:rs749948570." evidence="14">
    <original>G</original>
    <variation>D</variation>
    <location>
        <position position="1652"/>
    </location>
</feature>
<feature type="sequence variant" id="VAR_089336" description="In MRT81; uncertain significance." evidence="14">
    <original>I</original>
    <variation>F</variation>
    <location>
        <position position="1662"/>
    </location>
</feature>
<feature type="sequence variant" id="VAR_089337" description="In MRT81; uncertain significance; dbSNP:rs1045124261." evidence="14">
    <location>
        <begin position="1761"/>
        <end position="2202"/>
    </location>
</feature>
<feature type="sequence variant" id="VAR_034861" description="In dbSNP:rs35011147.">
    <original>C</original>
    <variation>W</variation>
    <location>
        <position position="1800"/>
    </location>
</feature>
<feature type="sequence variant" id="VAR_089338" description="In MRT81; uncertain significance; dbSNP:rs1381176199." evidence="14">
    <original>H</original>
    <variation>R</variation>
    <location>
        <position position="1898"/>
    </location>
</feature>
<feature type="sequence variant" id="VAR_034862" description="In dbSNP:rs3213542.">
    <original>V</original>
    <variation>M</variation>
    <location>
        <position position="1930"/>
    </location>
</feature>
<feature type="sequence variant" id="VAR_034863" description="In dbSNP:rs240780." evidence="4 16">
    <original>S</original>
    <variation>C</variation>
    <location>
        <position position="1995"/>
    </location>
</feature>
<feature type="sequence variant" id="VAR_034864" description="In dbSNP:rs240768.">
    <original>Y</original>
    <variation>C</variation>
    <location>
        <position position="2176"/>
    </location>
</feature>
<feature type="mutagenesis site" description="Defective activation of the ribosome quality control (RQC) pathway. Impairs its association with ribosomes." evidence="12 13 15">
    <original>K</original>
    <variation>R</variation>
    <location>
        <position position="505"/>
    </location>
</feature>
<feature type="mutagenesis site" description="Abolishes 3'-5' DNA helicase activity and ability to promote DNA repair." evidence="7">
    <original>G</original>
    <variation>D</variation>
    <location>
        <position position="1354"/>
    </location>
</feature>
<feature type="sequence conflict" description="In Ref. 5; AAH26066." evidence="21" ref="5">
    <original>G</original>
    <variation>E</variation>
    <location>
        <position position="86"/>
    </location>
</feature>
<feature type="sequence conflict" description="In Ref. 1; CAD39122." evidence="21" ref="1">
    <original>P</original>
    <variation>S</variation>
    <location>
        <position position="444"/>
    </location>
</feature>
<feature type="sequence conflict" description="In Ref. 5; AAH26066." evidence="21" ref="5">
    <original>V</original>
    <variation>A</variation>
    <location>
        <position position="582"/>
    </location>
</feature>
<feature type="sequence conflict" description="In Ref. 1; CAD39122." evidence="21" ref="1">
    <original>P</original>
    <variation>S</variation>
    <location>
        <position position="750"/>
    </location>
</feature>
<feature type="sequence conflict" description="In Ref. 7; CAA11679." evidence="21" ref="7">
    <original>S</original>
    <variation>F</variation>
    <location>
        <position position="1187"/>
    </location>
</feature>
<feature type="sequence conflict" description="In Ref. 7; CAA11679." evidence="21" ref="7">
    <original>C</original>
    <variation>S</variation>
    <location>
        <position position="1343"/>
    </location>
</feature>
<feature type="helix" evidence="25">
    <location>
        <begin position="6"/>
        <end position="14"/>
    </location>
</feature>
<feature type="helix" evidence="25">
    <location>
        <begin position="16"/>
        <end position="19"/>
    </location>
</feature>
<feature type="helix" evidence="25">
    <location>
        <begin position="20"/>
        <end position="22"/>
    </location>
</feature>
<feature type="helix" evidence="25">
    <location>
        <begin position="26"/>
        <end position="35"/>
    </location>
</feature>
<feature type="turn" evidence="25">
    <location>
        <begin position="36"/>
        <end position="39"/>
    </location>
</feature>
<feature type="helix" evidence="25">
    <location>
        <begin position="47"/>
        <end position="57"/>
    </location>
</feature>
<feature type="helix" evidence="25">
    <location>
        <begin position="60"/>
        <end position="81"/>
    </location>
</feature>
<feature type="strand" evidence="25">
    <location>
        <begin position="83"/>
        <end position="85"/>
    </location>
</feature>
<feature type="helix" evidence="25">
    <location>
        <begin position="87"/>
        <end position="101"/>
    </location>
</feature>
<feature type="helix" evidence="25">
    <location>
        <begin position="109"/>
        <end position="119"/>
    </location>
</feature>
<feature type="helix" evidence="25">
    <location>
        <begin position="124"/>
        <end position="138"/>
    </location>
</feature>
<feature type="helix" evidence="25">
    <location>
        <begin position="143"/>
        <end position="159"/>
    </location>
</feature>
<feature type="turn" evidence="25">
    <location>
        <begin position="163"/>
        <end position="166"/>
    </location>
</feature>
<feature type="strand" evidence="26">
    <location>
        <begin position="419"/>
        <end position="422"/>
    </location>
</feature>
<feature type="strand" evidence="26">
    <location>
        <begin position="460"/>
        <end position="463"/>
    </location>
</feature>
<feature type="helix" evidence="26">
    <location>
        <begin position="465"/>
        <end position="470"/>
    </location>
</feature>
<feature type="helix" evidence="26">
    <location>
        <begin position="479"/>
        <end position="488"/>
    </location>
</feature>
<feature type="strand" evidence="26">
    <location>
        <begin position="495"/>
        <end position="498"/>
    </location>
</feature>
<feature type="helix" evidence="26">
    <location>
        <begin position="503"/>
        <end position="520"/>
    </location>
</feature>
<feature type="turn" evidence="26">
    <location>
        <begin position="522"/>
        <end position="526"/>
    </location>
</feature>
<feature type="strand" evidence="26">
    <location>
        <begin position="533"/>
        <end position="536"/>
    </location>
</feature>
<feature type="helix" evidence="26">
    <location>
        <begin position="540"/>
        <end position="553"/>
    </location>
</feature>
<feature type="strand" evidence="26">
    <location>
        <begin position="565"/>
        <end position="567"/>
    </location>
</feature>
<feature type="helix" evidence="26">
    <location>
        <begin position="572"/>
        <end position="577"/>
    </location>
</feature>
<feature type="strand" evidence="26">
    <location>
        <begin position="580"/>
        <end position="583"/>
    </location>
</feature>
<feature type="helix" evidence="26">
    <location>
        <begin position="585"/>
        <end position="593"/>
    </location>
</feature>
<feature type="strand" evidence="26">
    <location>
        <begin position="597"/>
        <end position="599"/>
    </location>
</feature>
<feature type="strand" evidence="26">
    <location>
        <begin position="607"/>
        <end position="609"/>
    </location>
</feature>
<feature type="helix" evidence="26">
    <location>
        <begin position="615"/>
        <end position="618"/>
    </location>
</feature>
<feature type="helix" evidence="26">
    <location>
        <begin position="621"/>
        <end position="638"/>
    </location>
</feature>
<feature type="strand" evidence="26">
    <location>
        <begin position="643"/>
        <end position="649"/>
    </location>
</feature>
<feature type="helix" evidence="26">
    <location>
        <begin position="655"/>
        <end position="660"/>
    </location>
</feature>
<feature type="turn" evidence="26">
    <location>
        <begin position="665"/>
        <end position="667"/>
    </location>
</feature>
<feature type="strand" evidence="26">
    <location>
        <begin position="668"/>
        <end position="671"/>
    </location>
</feature>
<feature type="turn" evidence="26">
    <location>
        <begin position="674"/>
        <end position="676"/>
    </location>
</feature>
<feature type="strand" evidence="26">
    <location>
        <begin position="677"/>
        <end position="679"/>
    </location>
</feature>
<feature type="helix" evidence="26">
    <location>
        <begin position="693"/>
        <end position="714"/>
    </location>
</feature>
<feature type="strand" evidence="26">
    <location>
        <begin position="718"/>
        <end position="720"/>
    </location>
</feature>
<feature type="helix" evidence="26">
    <location>
        <begin position="725"/>
        <end position="740"/>
    </location>
</feature>
<feature type="helix" evidence="26">
    <location>
        <begin position="741"/>
        <end position="743"/>
    </location>
</feature>
<feature type="helix" evidence="26">
    <location>
        <begin position="745"/>
        <end position="747"/>
    </location>
</feature>
<feature type="helix" evidence="26">
    <location>
        <begin position="754"/>
        <end position="765"/>
    </location>
</feature>
<feature type="helix" evidence="26">
    <location>
        <begin position="770"/>
        <end position="774"/>
    </location>
</feature>
<feature type="turn" evidence="26">
    <location>
        <begin position="775"/>
        <end position="778"/>
    </location>
</feature>
<feature type="strand" evidence="26">
    <location>
        <begin position="779"/>
        <end position="781"/>
    </location>
</feature>
<feature type="strand" evidence="26">
    <location>
        <begin position="784"/>
        <end position="786"/>
    </location>
</feature>
<feature type="helix" evidence="26">
    <location>
        <begin position="788"/>
        <end position="800"/>
    </location>
</feature>
<feature type="strand" evidence="26">
    <location>
        <begin position="804"/>
        <end position="807"/>
    </location>
</feature>
<feature type="helix" evidence="26">
    <location>
        <begin position="812"/>
        <end position="815"/>
    </location>
</feature>
<feature type="strand" evidence="26">
    <location>
        <begin position="821"/>
        <end position="824"/>
    </location>
</feature>
<feature type="turn" evidence="26">
    <location>
        <begin position="833"/>
        <end position="835"/>
    </location>
</feature>
<feature type="helix" evidence="26">
    <location>
        <begin position="843"/>
        <end position="851"/>
    </location>
</feature>
<feature type="turn" evidence="26">
    <location>
        <begin position="856"/>
        <end position="858"/>
    </location>
</feature>
<feature type="strand" evidence="26">
    <location>
        <begin position="862"/>
        <end position="865"/>
    </location>
</feature>
<feature type="helix" evidence="26">
    <location>
        <begin position="870"/>
        <end position="877"/>
    </location>
</feature>
<feature type="turn" evidence="26">
    <location>
        <begin position="878"/>
        <end position="880"/>
    </location>
</feature>
<feature type="helix" evidence="26">
    <location>
        <begin position="894"/>
        <end position="904"/>
    </location>
</feature>
<feature type="helix" evidence="26">
    <location>
        <begin position="910"/>
        <end position="919"/>
    </location>
</feature>
<feature type="helix" evidence="26">
    <location>
        <begin position="921"/>
        <end position="928"/>
    </location>
</feature>
<feature type="helix" evidence="26">
    <location>
        <begin position="931"/>
        <end position="933"/>
    </location>
</feature>
<feature type="helix" evidence="26">
    <location>
        <begin position="937"/>
        <end position="942"/>
    </location>
</feature>
<feature type="helix" evidence="26">
    <location>
        <begin position="947"/>
        <end position="962"/>
    </location>
</feature>
<feature type="turn" evidence="26">
    <location>
        <begin position="963"/>
        <end position="965"/>
    </location>
</feature>
<feature type="strand" evidence="26">
    <location>
        <begin position="966"/>
        <end position="970"/>
    </location>
</feature>
<feature type="turn" evidence="26">
    <location>
        <begin position="971"/>
        <end position="974"/>
    </location>
</feature>
<feature type="strand" evidence="26">
    <location>
        <begin position="975"/>
        <end position="978"/>
    </location>
</feature>
<feature type="helix" evidence="26">
    <location>
        <begin position="980"/>
        <end position="987"/>
    </location>
</feature>
<feature type="helix" evidence="26">
    <location>
        <begin position="992"/>
        <end position="1001"/>
    </location>
</feature>
<feature type="helix" evidence="26">
    <location>
        <begin position="1010"/>
        <end position="1016"/>
    </location>
</feature>
<feature type="helix" evidence="26">
    <location>
        <begin position="1019"/>
        <end position="1021"/>
    </location>
</feature>
<feature type="helix" evidence="26">
    <location>
        <begin position="1028"/>
        <end position="1040"/>
    </location>
</feature>
<feature type="turn" evidence="26">
    <location>
        <begin position="1047"/>
        <end position="1050"/>
    </location>
</feature>
<feature type="helix" evidence="26">
    <location>
        <begin position="1053"/>
        <end position="1065"/>
    </location>
</feature>
<feature type="helix" evidence="26">
    <location>
        <begin position="1073"/>
        <end position="1100"/>
    </location>
</feature>
<feature type="helix" evidence="26">
    <location>
        <begin position="1103"/>
        <end position="1118"/>
    </location>
</feature>
<feature type="helix" evidence="26">
    <location>
        <begin position="1126"/>
        <end position="1129"/>
    </location>
</feature>
<feature type="strand" evidence="26">
    <location>
        <begin position="1131"/>
        <end position="1133"/>
    </location>
</feature>
<feature type="helix" evidence="26">
    <location>
        <begin position="1135"/>
        <end position="1143"/>
    </location>
</feature>
<feature type="helix" evidence="26">
    <location>
        <begin position="1148"/>
        <end position="1153"/>
    </location>
</feature>
<feature type="helix" evidence="26">
    <location>
        <begin position="1156"/>
        <end position="1163"/>
    </location>
</feature>
<feature type="helix" evidence="26">
    <location>
        <begin position="1166"/>
        <end position="1176"/>
    </location>
</feature>
<feature type="strand" evidence="26">
    <location>
        <begin position="1182"/>
        <end position="1187"/>
    </location>
</feature>
<feature type="strand" evidence="26">
    <location>
        <begin position="1192"/>
        <end position="1195"/>
    </location>
</feature>
<feature type="strand" evidence="26">
    <location>
        <begin position="1198"/>
        <end position="1204"/>
    </location>
</feature>
<feature type="helix" evidence="26">
    <location>
        <begin position="1210"/>
        <end position="1213"/>
    </location>
</feature>
<feature type="strand" evidence="26">
    <location>
        <begin position="1218"/>
        <end position="1225"/>
    </location>
</feature>
<feature type="turn" evidence="26">
    <location>
        <begin position="1227"/>
        <end position="1229"/>
    </location>
</feature>
<feature type="strand" evidence="26">
    <location>
        <begin position="1233"/>
        <end position="1240"/>
    </location>
</feature>
<feature type="helix" evidence="26">
    <location>
        <begin position="1242"/>
        <end position="1247"/>
    </location>
</feature>
<feature type="strand" evidence="26">
    <location>
        <begin position="1251"/>
        <end position="1255"/>
    </location>
</feature>
<feature type="strand" evidence="26">
    <location>
        <begin position="1265"/>
        <end position="1276"/>
    </location>
</feature>
<feature type="strand" evidence="26">
    <location>
        <begin position="1280"/>
        <end position="1286"/>
    </location>
</feature>
<feature type="helix" evidence="26">
    <location>
        <begin position="1310"/>
        <end position="1313"/>
    </location>
</feature>
<feature type="helix" evidence="26">
    <location>
        <begin position="1316"/>
        <end position="1319"/>
    </location>
</feature>
<feature type="helix" evidence="26">
    <location>
        <begin position="1329"/>
        <end position="1337"/>
    </location>
</feature>
<feature type="strand" evidence="26">
    <location>
        <begin position="1345"/>
        <end position="1348"/>
    </location>
</feature>
<feature type="helix" evidence="26">
    <location>
        <begin position="1355"/>
        <end position="1369"/>
    </location>
</feature>
<feature type="strand" evidence="26">
    <location>
        <begin position="1376"/>
        <end position="1378"/>
    </location>
</feature>
<feature type="helix" evidence="26">
    <location>
        <begin position="1382"/>
        <end position="1395"/>
    </location>
</feature>
<feature type="turn" evidence="26">
    <location>
        <begin position="1396"/>
        <end position="1399"/>
    </location>
</feature>
<feature type="strand" evidence="26">
    <location>
        <begin position="1400"/>
        <end position="1402"/>
    </location>
</feature>
<feature type="helix" evidence="26">
    <location>
        <begin position="1411"/>
        <end position="1419"/>
    </location>
</feature>
<feature type="strand" evidence="26">
    <location>
        <begin position="1424"/>
        <end position="1426"/>
    </location>
</feature>
<feature type="helix" evidence="26">
    <location>
        <begin position="1428"/>
        <end position="1434"/>
    </location>
</feature>
<feature type="helix" evidence="26">
    <location>
        <begin position="1444"/>
        <end position="1446"/>
    </location>
</feature>
<feature type="strand" evidence="26">
    <location>
        <begin position="1449"/>
        <end position="1453"/>
    </location>
</feature>
<feature type="helix" evidence="26">
    <location>
        <begin position="1455"/>
        <end position="1458"/>
    </location>
</feature>
<feature type="strand" evidence="26">
    <location>
        <begin position="1459"/>
        <end position="1462"/>
    </location>
</feature>
<feature type="helix" evidence="26">
    <location>
        <begin position="1465"/>
        <end position="1480"/>
    </location>
</feature>
<feature type="strand" evidence="26">
    <location>
        <begin position="1485"/>
        <end position="1489"/>
    </location>
</feature>
<feature type="helix" evidence="26">
    <location>
        <begin position="1496"/>
        <end position="1502"/>
    </location>
</feature>
<feature type="strand" evidence="26">
    <location>
        <begin position="1506"/>
        <end position="1512"/>
    </location>
</feature>
<feature type="strand" evidence="26">
    <location>
        <begin position="1518"/>
        <end position="1520"/>
    </location>
</feature>
<feature type="strand" evidence="26">
    <location>
        <begin position="1522"/>
        <end position="1525"/>
    </location>
</feature>
<feature type="helix" evidence="26">
    <location>
        <begin position="1535"/>
        <end position="1552"/>
    </location>
</feature>
<feature type="strand" evidence="26">
    <location>
        <begin position="1559"/>
        <end position="1561"/>
    </location>
</feature>
<feature type="strand" evidence="26">
    <location>
        <begin position="1564"/>
        <end position="1566"/>
    </location>
</feature>
<feature type="helix" evidence="26">
    <location>
        <begin position="1567"/>
        <end position="1578"/>
    </location>
</feature>
<feature type="strand" evidence="26">
    <location>
        <begin position="1581"/>
        <end position="1583"/>
    </location>
</feature>
<feature type="turn" evidence="26">
    <location>
        <begin position="1585"/>
        <end position="1588"/>
    </location>
</feature>
<feature type="helix" evidence="26">
    <location>
        <begin position="1593"/>
        <end position="1602"/>
    </location>
</feature>
<feature type="turn" evidence="26">
    <location>
        <begin position="1609"/>
        <end position="1615"/>
    </location>
</feature>
<feature type="helix" evidence="26">
    <location>
        <begin position="1623"/>
        <end position="1625"/>
    </location>
</feature>
<feature type="helix" evidence="26">
    <location>
        <begin position="1627"/>
        <end position="1636"/>
    </location>
</feature>
<feature type="strand" evidence="26">
    <location>
        <begin position="1643"/>
        <end position="1645"/>
    </location>
</feature>
<feature type="strand" evidence="26">
    <location>
        <begin position="1651"/>
        <end position="1653"/>
    </location>
</feature>
<feature type="strand" evidence="26">
    <location>
        <begin position="1658"/>
        <end position="1662"/>
    </location>
</feature>
<feature type="strand" evidence="26">
    <location>
        <begin position="1666"/>
        <end position="1668"/>
    </location>
</feature>
<feature type="turn" evidence="26">
    <location>
        <begin position="1670"/>
        <end position="1672"/>
    </location>
</feature>
<feature type="strand" evidence="26">
    <location>
        <begin position="1673"/>
        <end position="1677"/>
    </location>
</feature>
<feature type="helix" evidence="26">
    <location>
        <begin position="1680"/>
        <end position="1687"/>
    </location>
</feature>
<feature type="turn" evidence="26">
    <location>
        <begin position="1693"/>
        <end position="1695"/>
    </location>
</feature>
<feature type="strand" evidence="26">
    <location>
        <begin position="1697"/>
        <end position="1703"/>
    </location>
</feature>
<feature type="helix" evidence="26">
    <location>
        <begin position="1707"/>
        <end position="1718"/>
    </location>
</feature>
<feature type="helix" evidence="26">
    <location>
        <begin position="1728"/>
        <end position="1730"/>
    </location>
</feature>
<feature type="helix" evidence="26">
    <location>
        <begin position="1731"/>
        <end position="1740"/>
    </location>
</feature>
<feature type="strand" evidence="26">
    <location>
        <begin position="1741"/>
        <end position="1743"/>
    </location>
</feature>
<feature type="helix" evidence="26">
    <location>
        <begin position="1747"/>
        <end position="1753"/>
    </location>
</feature>
<feature type="helix" evidence="26">
    <location>
        <begin position="1754"/>
        <end position="1756"/>
    </location>
</feature>
<feature type="helix" evidence="26">
    <location>
        <begin position="1758"/>
        <end position="1765"/>
    </location>
</feature>
<feature type="helix" evidence="26">
    <location>
        <begin position="1768"/>
        <end position="1770"/>
    </location>
</feature>
<feature type="helix" evidence="26">
    <location>
        <begin position="1777"/>
        <end position="1797"/>
    </location>
</feature>
<feature type="turn" evidence="26">
    <location>
        <begin position="1804"/>
        <end position="1806"/>
    </location>
</feature>
<feature type="strand" evidence="26">
    <location>
        <begin position="1807"/>
        <end position="1809"/>
    </location>
</feature>
<feature type="helix" evidence="26">
    <location>
        <begin position="1814"/>
        <end position="1821"/>
    </location>
</feature>
<feature type="helix" evidence="26">
    <location>
        <begin position="1826"/>
        <end position="1834"/>
    </location>
</feature>
<feature type="helix" evidence="26">
    <location>
        <begin position="1842"/>
        <end position="1850"/>
    </location>
</feature>
<feature type="helix" evidence="26">
    <location>
        <begin position="1853"/>
        <end position="1855"/>
    </location>
</feature>
<feature type="helix" evidence="26">
    <location>
        <begin position="1864"/>
        <end position="1871"/>
    </location>
</feature>
<feature type="strand" evidence="26">
    <location>
        <begin position="1873"/>
        <end position="1877"/>
    </location>
</feature>
<feature type="helix" evidence="26">
    <location>
        <begin position="1881"/>
        <end position="1883"/>
    </location>
</feature>
<feature type="helix" evidence="26">
    <location>
        <begin position="1887"/>
        <end position="1899"/>
    </location>
</feature>
<feature type="helix" evidence="26">
    <location>
        <begin position="1907"/>
        <end position="1934"/>
    </location>
</feature>
<feature type="helix" evidence="26">
    <location>
        <begin position="1938"/>
        <end position="1952"/>
    </location>
</feature>
<feature type="strand" evidence="26">
    <location>
        <begin position="1956"/>
        <end position="1958"/>
    </location>
</feature>
<feature type="helix" evidence="26">
    <location>
        <begin position="1960"/>
        <end position="1963"/>
    </location>
</feature>
<feature type="helix" evidence="26">
    <location>
        <begin position="1969"/>
        <end position="1971"/>
    </location>
</feature>
<feature type="helix" evidence="26">
    <location>
        <begin position="1972"/>
        <end position="1976"/>
    </location>
</feature>
<feature type="strand" evidence="26">
    <location>
        <begin position="1981"/>
        <end position="1985"/>
    </location>
</feature>
<feature type="helix" evidence="26">
    <location>
        <begin position="1996"/>
        <end position="2003"/>
    </location>
</feature>
<feature type="turn" evidence="26">
    <location>
        <begin position="2004"/>
        <end position="2006"/>
    </location>
</feature>
<feature type="strand" evidence="26">
    <location>
        <begin position="2008"/>
        <end position="2010"/>
    </location>
</feature>
<feature type="helix" evidence="26">
    <location>
        <begin position="2011"/>
        <end position="2014"/>
    </location>
</feature>
<feature type="helix" evidence="26">
    <location>
        <begin position="2016"/>
        <end position="2018"/>
    </location>
</feature>
<feature type="helix" evidence="26">
    <location>
        <begin position="2023"/>
        <end position="2032"/>
    </location>
</feature>
<feature type="strand" evidence="26">
    <location>
        <begin position="2036"/>
        <end position="2044"/>
    </location>
</feature>
<feature type="strand" evidence="26">
    <location>
        <begin position="2056"/>
        <end position="2058"/>
    </location>
</feature>
<feature type="turn" evidence="26">
    <location>
        <begin position="2068"/>
        <end position="2070"/>
    </location>
</feature>
<feature type="strand" evidence="26">
    <location>
        <begin position="2080"/>
        <end position="2088"/>
    </location>
</feature>
<feature type="strand" evidence="26">
    <location>
        <begin position="2092"/>
        <end position="2094"/>
    </location>
</feature>
<feature type="strand" evidence="26">
    <location>
        <begin position="2115"/>
        <end position="2121"/>
    </location>
</feature>
<feature type="turn" evidence="26">
    <location>
        <begin position="2122"/>
        <end position="2125"/>
    </location>
</feature>
<feature type="strand" evidence="26">
    <location>
        <begin position="2126"/>
        <end position="2133"/>
    </location>
</feature>
<feature type="strand" evidence="26">
    <location>
        <begin position="2137"/>
        <end position="2146"/>
    </location>
</feature>
<feature type="strand" evidence="26">
    <location>
        <begin position="2154"/>
        <end position="2165"/>
    </location>
</feature>
<feature type="strand" evidence="26">
    <location>
        <begin position="2171"/>
        <end position="2178"/>
    </location>
</feature>
<comment type="function">
    <text evidence="4 7 8 12 13 15">ATPase involved both in DNA repair and rescue of stalled ribosomes (PubMed:22055184, PubMed:28757607, PubMed:32099016, PubMed:32579943, PubMed:36302773). 3'-5' DNA helicase involved in repair of alkylated DNA: promotes DNA unwinding to generate single-stranded substrate needed for ALKBH3, enabling ALKBH3 to process alkylated N3-methylcytosine (3mC) within double-stranded regions (PubMed:22055184). Also involved in activation of the ribosome quality control (RQC) pathway, a pathway that degrades nascent peptide chains during problematic translation (PubMed:28757607, PubMed:32099016, PubMed:32579943, PubMed:36302773). Drives the splitting of stalled ribosomes that are ubiquitinated in a ZNF598-dependent manner, as part of the ribosome quality control trigger (RQT) complex (PubMed:28757607, PubMed:32099016, PubMed:32579943, PubMed:36302773). Part of the ASC-1 complex that enhances NF-kappa-B, SRF and AP1 transactivation (PubMed:12077347).</text>
</comment>
<comment type="catalytic activity">
    <reaction evidence="7">
        <text>Couples ATP hydrolysis with the unwinding of duplex DNA by translocating in the 3'-5' direction.</text>
        <dbReference type="EC" id="5.6.2.4"/>
    </reaction>
</comment>
<comment type="catalytic activity">
    <reaction evidence="22">
        <text>ATP + H2O = ADP + phosphate + H(+)</text>
        <dbReference type="Rhea" id="RHEA:13065"/>
        <dbReference type="ChEBI" id="CHEBI:15377"/>
        <dbReference type="ChEBI" id="CHEBI:15378"/>
        <dbReference type="ChEBI" id="CHEBI:30616"/>
        <dbReference type="ChEBI" id="CHEBI:43474"/>
        <dbReference type="ChEBI" id="CHEBI:456216"/>
        <dbReference type="EC" id="5.6.2.4"/>
    </reaction>
</comment>
<comment type="subunit">
    <text evidence="4 7 8 9 10 11 12 13 15">Identified in the ASCC complex that contains ASCC1, ASCC2 and ASCC3 (PubMed:12077347, PubMed:29144457, PubMed:29997253). Functions as scaffolding subunit that interacts directly with both ASCC1 and ASCC2 (PubMed:29144457, PubMed:29997253). Interacts directly with ALKBH3, and thereby recruits ALKBH3 to the ASCC complex (PubMed:22055184, PubMed:29144457). Part of the ASC-1/TRIP4 complex, that contains TRIP4, ASCC1, ASCC2 and ASCC3 (PubMed:12077347). Part of the RQT (ribosome quality control trigger) complex, that contains ASCC2, ASCC3 and TRIP4 (PubMed:32099016, PubMed:32579943, PubMed:36302773). Associates with ribosomes; recruited to collided ribosomes (PubMed:32099016, PubMed:32579943, PubMed:36302773). Interacts with ZCCHC4 (PubMed:31799605). Interacts with ZNF598 (PubMed:28757607). Interacts with RPS3 (PubMed:28757607).</text>
</comment>
<comment type="interaction">
    <interactant intactId="EBI-1210710">
        <id>Q8N3C0</id>
    </interactant>
    <interactant intactId="EBI-10268317">
        <id>Q8N9N2</id>
        <label>ASCC1</label>
    </interactant>
    <organismsDiffer>false</organismsDiffer>
    <experiments>3</experiments>
</comment>
<comment type="interaction">
    <interactant intactId="EBI-1210710">
        <id>Q8N3C0</id>
    </interactant>
    <interactant intactId="EBI-10962548">
        <id>Q8N9N2-2</id>
        <label>ASCC1</label>
    </interactant>
    <organismsDiffer>false</organismsDiffer>
    <experiments>4</experiments>
</comment>
<comment type="interaction">
    <interactant intactId="EBI-1210710">
        <id>Q8N3C0</id>
    </interactant>
    <interactant intactId="EBI-711197">
        <id>Q9H1I8</id>
        <label>ASCC2</label>
    </interactant>
    <organismsDiffer>false</organismsDiffer>
    <experiments>9</experiments>
</comment>
<comment type="interaction">
    <interactant intactId="EBI-1210710">
        <id>Q8N3C0</id>
    </interactant>
    <interactant intactId="EBI-10763431">
        <id>P53701</id>
        <label>HCCS</label>
    </interactant>
    <organismsDiffer>false</organismsDiffer>
    <experiments>2</experiments>
</comment>
<comment type="subcellular location">
    <subcellularLocation>
        <location evidence="4 9">Nucleus</location>
    </subcellularLocation>
    <subcellularLocation>
        <location evidence="9 10">Nucleus speckle</location>
    </subcellularLocation>
    <subcellularLocation>
        <location evidence="8">Cytoplasm</location>
        <location evidence="8">Cytosol</location>
    </subcellularLocation>
    <text evidence="9">Colocalizes with ALKBH3 and ASCC2 in nuclear foci when cells have been exposed to alkylating agents that cause DNA damage.</text>
</comment>
<comment type="alternative products">
    <event type="alternative splicing"/>
    <isoform>
        <id>Q8N3C0-1</id>
        <name>1</name>
        <sequence type="displayed"/>
    </isoform>
    <isoform>
        <id>Q8N3C0-3</id>
        <name>2</name>
        <sequence type="described" ref="VSP_042955 VSP_042956"/>
    </isoform>
    <isoform>
        <id>Q8N3C0-4</id>
        <name>3</name>
        <sequence type="described" ref="VSP_042957 VSP_042958"/>
    </isoform>
</comment>
<comment type="tissue specificity">
    <text evidence="4">Ubiquitous.</text>
</comment>
<comment type="disease" evidence="6 14">
    <disease id="DI-06840">
        <name>Intellectual developmental disorder, autosomal recessive 81</name>
        <acronym>MRT81</acronym>
        <description>An autosomal recessive disorder characterized by variable features including mild to severe developmental delay, hypotonia, feeding difficulties, extreme fatigue, and neurobehavioral abnormalities.</description>
        <dbReference type="MIM" id="620700"/>
    </disease>
    <text>The disease may be caused by variants affecting the gene represented in this entry.</text>
</comment>
<comment type="similarity">
    <text evidence="21">Belongs to the helicase family.</text>
</comment>
<comment type="sequence caution" evidence="21">
    <conflict type="frameshift">
        <sequence resource="EMBL-CDS" id="AAG45474"/>
    </conflict>
</comment>
<comment type="sequence caution" evidence="21">
    <conflict type="erroneous initiation">
        <sequence resource="EMBL-CDS" id="CAA11679"/>
    </conflict>
    <text>Truncated N-terminus.</text>
</comment>
<comment type="sequence caution" evidence="21">
    <conflict type="frameshift">
        <sequence resource="EMBL-CDS" id="CAA11679"/>
    </conflict>
</comment>
<reference key="1">
    <citation type="journal article" date="2007" name="BMC Genomics">
        <title>The full-ORF clone resource of the German cDNA consortium.</title>
        <authorList>
            <person name="Bechtel S."/>
            <person name="Rosenfelder H."/>
            <person name="Duda A."/>
            <person name="Schmidt C.P."/>
            <person name="Ernst U."/>
            <person name="Wellenreuther R."/>
            <person name="Mehrle A."/>
            <person name="Schuster C."/>
            <person name="Bahr A."/>
            <person name="Bloecker H."/>
            <person name="Heubner D."/>
            <person name="Hoerlein A."/>
            <person name="Michel G."/>
            <person name="Wedler H."/>
            <person name="Koehrer K."/>
            <person name="Ottenwaelder B."/>
            <person name="Poustka A."/>
            <person name="Wiemann S."/>
            <person name="Schupp I."/>
        </authorList>
    </citation>
    <scope>NUCLEOTIDE SEQUENCE [LARGE SCALE MRNA] (ISOFORM 1)</scope>
    <scope>VARIANT PHE-146</scope>
    <source>
        <tissue>Melanoma</tissue>
    </source>
</reference>
<reference key="2">
    <citation type="journal article" date="2004" name="Nat. Genet.">
        <title>Complete sequencing and characterization of 21,243 full-length human cDNAs.</title>
        <authorList>
            <person name="Ota T."/>
            <person name="Suzuki Y."/>
            <person name="Nishikawa T."/>
            <person name="Otsuki T."/>
            <person name="Sugiyama T."/>
            <person name="Irie R."/>
            <person name="Wakamatsu A."/>
            <person name="Hayashi K."/>
            <person name="Sato H."/>
            <person name="Nagai K."/>
            <person name="Kimura K."/>
            <person name="Makita H."/>
            <person name="Sekine M."/>
            <person name="Obayashi M."/>
            <person name="Nishi T."/>
            <person name="Shibahara T."/>
            <person name="Tanaka T."/>
            <person name="Ishii S."/>
            <person name="Yamamoto J."/>
            <person name="Saito K."/>
            <person name="Kawai Y."/>
            <person name="Isono Y."/>
            <person name="Nakamura Y."/>
            <person name="Nagahari K."/>
            <person name="Murakami K."/>
            <person name="Yasuda T."/>
            <person name="Iwayanagi T."/>
            <person name="Wagatsuma M."/>
            <person name="Shiratori A."/>
            <person name="Sudo H."/>
            <person name="Hosoiri T."/>
            <person name="Kaku Y."/>
            <person name="Kodaira H."/>
            <person name="Kondo H."/>
            <person name="Sugawara M."/>
            <person name="Takahashi M."/>
            <person name="Kanda K."/>
            <person name="Yokoi T."/>
            <person name="Furuya T."/>
            <person name="Kikkawa E."/>
            <person name="Omura Y."/>
            <person name="Abe K."/>
            <person name="Kamihara K."/>
            <person name="Katsuta N."/>
            <person name="Sato K."/>
            <person name="Tanikawa M."/>
            <person name="Yamazaki M."/>
            <person name="Ninomiya K."/>
            <person name="Ishibashi T."/>
            <person name="Yamashita H."/>
            <person name="Murakawa K."/>
            <person name="Fujimori K."/>
            <person name="Tanai H."/>
            <person name="Kimata M."/>
            <person name="Watanabe M."/>
            <person name="Hiraoka S."/>
            <person name="Chiba Y."/>
            <person name="Ishida S."/>
            <person name="Ono Y."/>
            <person name="Takiguchi S."/>
            <person name="Watanabe S."/>
            <person name="Yosida M."/>
            <person name="Hotuta T."/>
            <person name="Kusano J."/>
            <person name="Kanehori K."/>
            <person name="Takahashi-Fujii A."/>
            <person name="Hara H."/>
            <person name="Tanase T.-O."/>
            <person name="Nomura Y."/>
            <person name="Togiya S."/>
            <person name="Komai F."/>
            <person name="Hara R."/>
            <person name="Takeuchi K."/>
            <person name="Arita M."/>
            <person name="Imose N."/>
            <person name="Musashino K."/>
            <person name="Yuuki H."/>
            <person name="Oshima A."/>
            <person name="Sasaki N."/>
            <person name="Aotsuka S."/>
            <person name="Yoshikawa Y."/>
            <person name="Matsunawa H."/>
            <person name="Ichihara T."/>
            <person name="Shiohata N."/>
            <person name="Sano S."/>
            <person name="Moriya S."/>
            <person name="Momiyama H."/>
            <person name="Satoh N."/>
            <person name="Takami S."/>
            <person name="Terashima Y."/>
            <person name="Suzuki O."/>
            <person name="Nakagawa S."/>
            <person name="Senoh A."/>
            <person name="Mizoguchi H."/>
            <person name="Goto Y."/>
            <person name="Shimizu F."/>
            <person name="Wakebe H."/>
            <person name="Hishigaki H."/>
            <person name="Watanabe T."/>
            <person name="Sugiyama A."/>
            <person name="Takemoto M."/>
            <person name="Kawakami B."/>
            <person name="Yamazaki M."/>
            <person name="Watanabe K."/>
            <person name="Kumagai A."/>
            <person name="Itakura S."/>
            <person name="Fukuzumi Y."/>
            <person name="Fujimori Y."/>
            <person name="Komiyama M."/>
            <person name="Tashiro H."/>
            <person name="Tanigami A."/>
            <person name="Fujiwara T."/>
            <person name="Ono T."/>
            <person name="Yamada K."/>
            <person name="Fujii Y."/>
            <person name="Ozaki K."/>
            <person name="Hirao M."/>
            <person name="Ohmori Y."/>
            <person name="Kawabata A."/>
            <person name="Hikiji T."/>
            <person name="Kobatake N."/>
            <person name="Inagaki H."/>
            <person name="Ikema Y."/>
            <person name="Okamoto S."/>
            <person name="Okitani R."/>
            <person name="Kawakami T."/>
            <person name="Noguchi S."/>
            <person name="Itoh T."/>
            <person name="Shigeta K."/>
            <person name="Senba T."/>
            <person name="Matsumura K."/>
            <person name="Nakajima Y."/>
            <person name="Mizuno T."/>
            <person name="Morinaga M."/>
            <person name="Sasaki M."/>
            <person name="Togashi T."/>
            <person name="Oyama M."/>
            <person name="Hata H."/>
            <person name="Watanabe M."/>
            <person name="Komatsu T."/>
            <person name="Mizushima-Sugano J."/>
            <person name="Satoh T."/>
            <person name="Shirai Y."/>
            <person name="Takahashi Y."/>
            <person name="Nakagawa K."/>
            <person name="Okumura K."/>
            <person name="Nagase T."/>
            <person name="Nomura N."/>
            <person name="Kikuchi H."/>
            <person name="Masuho Y."/>
            <person name="Yamashita R."/>
            <person name="Nakai K."/>
            <person name="Yada T."/>
            <person name="Nakamura Y."/>
            <person name="Ohara O."/>
            <person name="Isogai T."/>
            <person name="Sugano S."/>
        </authorList>
    </citation>
    <scope>NUCLEOTIDE SEQUENCE [LARGE SCALE MRNA] (ISOFORM 2)</scope>
    <source>
        <tissue>Thymus</tissue>
    </source>
</reference>
<reference key="3">
    <citation type="journal article" date="2003" name="Nature">
        <title>The DNA sequence and analysis of human chromosome 6.</title>
        <authorList>
            <person name="Mungall A.J."/>
            <person name="Palmer S.A."/>
            <person name="Sims S.K."/>
            <person name="Edwards C.A."/>
            <person name="Ashurst J.L."/>
            <person name="Wilming L."/>
            <person name="Jones M.C."/>
            <person name="Horton R."/>
            <person name="Hunt S.E."/>
            <person name="Scott C.E."/>
            <person name="Gilbert J.G.R."/>
            <person name="Clamp M.E."/>
            <person name="Bethel G."/>
            <person name="Milne S."/>
            <person name="Ainscough R."/>
            <person name="Almeida J.P."/>
            <person name="Ambrose K.D."/>
            <person name="Andrews T.D."/>
            <person name="Ashwell R.I.S."/>
            <person name="Babbage A.K."/>
            <person name="Bagguley C.L."/>
            <person name="Bailey J."/>
            <person name="Banerjee R."/>
            <person name="Barker D.J."/>
            <person name="Barlow K.F."/>
            <person name="Bates K."/>
            <person name="Beare D.M."/>
            <person name="Beasley H."/>
            <person name="Beasley O."/>
            <person name="Bird C.P."/>
            <person name="Blakey S.E."/>
            <person name="Bray-Allen S."/>
            <person name="Brook J."/>
            <person name="Brown A.J."/>
            <person name="Brown J.Y."/>
            <person name="Burford D.C."/>
            <person name="Burrill W."/>
            <person name="Burton J."/>
            <person name="Carder C."/>
            <person name="Carter N.P."/>
            <person name="Chapman J.C."/>
            <person name="Clark S.Y."/>
            <person name="Clark G."/>
            <person name="Clee C.M."/>
            <person name="Clegg S."/>
            <person name="Cobley V."/>
            <person name="Collier R.E."/>
            <person name="Collins J.E."/>
            <person name="Colman L.K."/>
            <person name="Corby N.R."/>
            <person name="Coville G.J."/>
            <person name="Culley K.M."/>
            <person name="Dhami P."/>
            <person name="Davies J."/>
            <person name="Dunn M."/>
            <person name="Earthrowl M.E."/>
            <person name="Ellington A.E."/>
            <person name="Evans K.A."/>
            <person name="Faulkner L."/>
            <person name="Francis M.D."/>
            <person name="Frankish A."/>
            <person name="Frankland J."/>
            <person name="French L."/>
            <person name="Garner P."/>
            <person name="Garnett J."/>
            <person name="Ghori M.J."/>
            <person name="Gilby L.M."/>
            <person name="Gillson C.J."/>
            <person name="Glithero R.J."/>
            <person name="Grafham D.V."/>
            <person name="Grant M."/>
            <person name="Gribble S."/>
            <person name="Griffiths C."/>
            <person name="Griffiths M.N.D."/>
            <person name="Hall R."/>
            <person name="Halls K.S."/>
            <person name="Hammond S."/>
            <person name="Harley J.L."/>
            <person name="Hart E.A."/>
            <person name="Heath P.D."/>
            <person name="Heathcott R."/>
            <person name="Holmes S.J."/>
            <person name="Howden P.J."/>
            <person name="Howe K.L."/>
            <person name="Howell G.R."/>
            <person name="Huckle E."/>
            <person name="Humphray S.J."/>
            <person name="Humphries M.D."/>
            <person name="Hunt A.R."/>
            <person name="Johnson C.M."/>
            <person name="Joy A.A."/>
            <person name="Kay M."/>
            <person name="Keenan S.J."/>
            <person name="Kimberley A.M."/>
            <person name="King A."/>
            <person name="Laird G.K."/>
            <person name="Langford C."/>
            <person name="Lawlor S."/>
            <person name="Leongamornlert D.A."/>
            <person name="Leversha M."/>
            <person name="Lloyd C.R."/>
            <person name="Lloyd D.M."/>
            <person name="Loveland J.E."/>
            <person name="Lovell J."/>
            <person name="Martin S."/>
            <person name="Mashreghi-Mohammadi M."/>
            <person name="Maslen G.L."/>
            <person name="Matthews L."/>
            <person name="McCann O.T."/>
            <person name="McLaren S.J."/>
            <person name="McLay K."/>
            <person name="McMurray A."/>
            <person name="Moore M.J.F."/>
            <person name="Mullikin J.C."/>
            <person name="Niblett D."/>
            <person name="Nickerson T."/>
            <person name="Novik K.L."/>
            <person name="Oliver K."/>
            <person name="Overton-Larty E.K."/>
            <person name="Parker A."/>
            <person name="Patel R."/>
            <person name="Pearce A.V."/>
            <person name="Peck A.I."/>
            <person name="Phillimore B.J.C.T."/>
            <person name="Phillips S."/>
            <person name="Plumb R.W."/>
            <person name="Porter K.M."/>
            <person name="Ramsey Y."/>
            <person name="Ranby S.A."/>
            <person name="Rice C.M."/>
            <person name="Ross M.T."/>
            <person name="Searle S.M."/>
            <person name="Sehra H.K."/>
            <person name="Sheridan E."/>
            <person name="Skuce C.D."/>
            <person name="Smith S."/>
            <person name="Smith M."/>
            <person name="Spraggon L."/>
            <person name="Squares S.L."/>
            <person name="Steward C.A."/>
            <person name="Sycamore N."/>
            <person name="Tamlyn-Hall G."/>
            <person name="Tester J."/>
            <person name="Theaker A.J."/>
            <person name="Thomas D.W."/>
            <person name="Thorpe A."/>
            <person name="Tracey A."/>
            <person name="Tromans A."/>
            <person name="Tubby B."/>
            <person name="Wall M."/>
            <person name="Wallis J.M."/>
            <person name="West A.P."/>
            <person name="White S.S."/>
            <person name="Whitehead S.L."/>
            <person name="Whittaker H."/>
            <person name="Wild A."/>
            <person name="Willey D.J."/>
            <person name="Wilmer T.E."/>
            <person name="Wood J.M."/>
            <person name="Wray P.W."/>
            <person name="Wyatt J.C."/>
            <person name="Young L."/>
            <person name="Younger R.M."/>
            <person name="Bentley D.R."/>
            <person name="Coulson A."/>
            <person name="Durbin R.M."/>
            <person name="Hubbard T."/>
            <person name="Sulston J.E."/>
            <person name="Dunham I."/>
            <person name="Rogers J."/>
            <person name="Beck S."/>
        </authorList>
    </citation>
    <scope>NUCLEOTIDE SEQUENCE [LARGE SCALE GENOMIC DNA]</scope>
</reference>
<reference key="4">
    <citation type="submission" date="2005-09" db="EMBL/GenBank/DDBJ databases">
        <authorList>
            <person name="Mural R.J."/>
            <person name="Istrail S."/>
            <person name="Sutton G.G."/>
            <person name="Florea L."/>
            <person name="Halpern A.L."/>
            <person name="Mobarry C.M."/>
            <person name="Lippert R."/>
            <person name="Walenz B."/>
            <person name="Shatkay H."/>
            <person name="Dew I."/>
            <person name="Miller J.R."/>
            <person name="Flanigan M.J."/>
            <person name="Edwards N.J."/>
            <person name="Bolanos R."/>
            <person name="Fasulo D."/>
            <person name="Halldorsson B.V."/>
            <person name="Hannenhalli S."/>
            <person name="Turner R."/>
            <person name="Yooseph S."/>
            <person name="Lu F."/>
            <person name="Nusskern D.R."/>
            <person name="Shue B.C."/>
            <person name="Zheng X.H."/>
            <person name="Zhong F."/>
            <person name="Delcher A.L."/>
            <person name="Huson D.H."/>
            <person name="Kravitz S.A."/>
            <person name="Mouchard L."/>
            <person name="Reinert K."/>
            <person name="Remington K.A."/>
            <person name="Clark A.G."/>
            <person name="Waterman M.S."/>
            <person name="Eichler E.E."/>
            <person name="Adams M.D."/>
            <person name="Hunkapiller M.W."/>
            <person name="Myers E.W."/>
            <person name="Venter J.C."/>
        </authorList>
    </citation>
    <scope>NUCLEOTIDE SEQUENCE [LARGE SCALE GENOMIC DNA]</scope>
</reference>
<reference key="5">
    <citation type="journal article" date="2004" name="Genome Res.">
        <title>The status, quality, and expansion of the NIH full-length cDNA project: the Mammalian Gene Collection (MGC).</title>
        <authorList>
            <consortium name="The MGC Project Team"/>
        </authorList>
    </citation>
    <scope>NUCLEOTIDE SEQUENCE [LARGE SCALE MRNA] (ISOFORMS 2 AND 3)</scope>
    <source>
        <tissue>Skin</tissue>
        <tissue>Testis</tissue>
    </source>
</reference>
<reference key="6">
    <citation type="journal article" date="2002" name="Mol. Cell. Biol.">
        <title>Novel transcription coactivator complex containing activating signal cointegrator 1.</title>
        <authorList>
            <person name="Jung D.-J."/>
            <person name="Sung H.-S."/>
            <person name="Goo Y.-W."/>
            <person name="Lee H.M."/>
            <person name="Park O.K."/>
            <person name="Jung S.-Y."/>
            <person name="Lim J."/>
            <person name="Kim H.-J."/>
            <person name="Lee S.-K."/>
            <person name="Kim T.S."/>
            <person name="Lee J.W."/>
            <person name="Lee Y.C."/>
        </authorList>
    </citation>
    <scope>NUCLEOTIDE SEQUENCE [MRNA] OF 277-2202</scope>
    <scope>PARTIAL PROTEIN SEQUENCE</scope>
    <scope>FUNCTION</scope>
    <scope>VARIANT CYS-1995</scope>
    <scope>IDENTIFICATION OF THE ASC-1 COMPLEX</scope>
    <scope>SUBCELLULAR LOCATION</scope>
    <scope>TISSUE SPECIFICITY</scope>
    <source>
        <tissue>Cervix carcinoma</tissue>
    </source>
</reference>
<reference key="7">
    <citation type="submission" date="1998-02" db="EMBL/GenBank/DDBJ databases">
        <title>The immunodominant antigen recognized by autologous CTL on a human melanoma is generated by a point mutation in a new member of the RNA helicase gene family.</title>
        <authorList>
            <person name="Baurain J.-F."/>
        </authorList>
    </citation>
    <scope>NUCLEOTIDE SEQUENCE [MRNA] OF 1012-2202</scope>
    <scope>VARIANT CYS-1995</scope>
    <source>
        <tissue>Melanoma</tissue>
    </source>
</reference>
<reference key="8">
    <citation type="journal article" date="2003" name="Nature">
        <title>Proteomic characterization of the human centrosome by protein correlation profiling.</title>
        <authorList>
            <person name="Andersen J.S."/>
            <person name="Wilkinson C.J."/>
            <person name="Mayor T."/>
            <person name="Mortensen P."/>
            <person name="Nigg E.A."/>
            <person name="Mann M."/>
        </authorList>
    </citation>
    <scope>IDENTIFICATION BY MASS SPECTROMETRY</scope>
    <source>
        <tissue>Lymphoblast</tissue>
    </source>
</reference>
<reference key="9">
    <citation type="journal article" date="2009" name="Science">
        <title>Lysine acetylation targets protein complexes and co-regulates major cellular functions.</title>
        <authorList>
            <person name="Choudhary C."/>
            <person name="Kumar C."/>
            <person name="Gnad F."/>
            <person name="Nielsen M.L."/>
            <person name="Rehman M."/>
            <person name="Walther T.C."/>
            <person name="Olsen J.V."/>
            <person name="Mann M."/>
        </authorList>
    </citation>
    <scope>ACETYLATION [LARGE SCALE ANALYSIS] AT LYS-572</scope>
    <scope>IDENTIFICATION BY MASS SPECTROMETRY [LARGE SCALE ANALYSIS]</scope>
</reference>
<reference key="10">
    <citation type="journal article" date="2011" name="BMC Syst. Biol.">
        <title>Initial characterization of the human central proteome.</title>
        <authorList>
            <person name="Burkard T.R."/>
            <person name="Planyavsky M."/>
            <person name="Kaupe I."/>
            <person name="Breitwieser F.P."/>
            <person name="Buerckstuemmer T."/>
            <person name="Bennett K.L."/>
            <person name="Superti-Furga G."/>
            <person name="Colinge J."/>
        </authorList>
    </citation>
    <scope>IDENTIFICATION BY MASS SPECTROMETRY [LARGE SCALE ANALYSIS]</scope>
</reference>
<reference key="11">
    <citation type="journal article" date="2011" name="Mol. Cell">
        <title>DNA unwinding by ASCC3 helicase is coupled to ALKBH3-dependent DNA alkylation repair and cancer cell proliferation.</title>
        <authorList>
            <person name="Dango S."/>
            <person name="Mosammaparast N."/>
            <person name="Sowa M.E."/>
            <person name="Xiong L.J."/>
            <person name="Wu F."/>
            <person name="Park K."/>
            <person name="Rubin M."/>
            <person name="Gygi S."/>
            <person name="Harper J.W."/>
            <person name="Shi Y."/>
        </authorList>
    </citation>
    <scope>FUNCTION</scope>
    <scope>CATALYTIC ACTIVITY</scope>
    <scope>INTERACTION WITH ALKBH3</scope>
    <scope>MUTAGENESIS OF GLY-1354</scope>
</reference>
<reference key="12">
    <citation type="journal article" date="2013" name="J. Proteome Res.">
        <title>Toward a comprehensive characterization of a human cancer cell phosphoproteome.</title>
        <authorList>
            <person name="Zhou H."/>
            <person name="Di Palma S."/>
            <person name="Preisinger C."/>
            <person name="Peng M."/>
            <person name="Polat A.N."/>
            <person name="Heck A.J."/>
            <person name="Mohammed S."/>
        </authorList>
    </citation>
    <scope>PHOSPHORYLATION [LARGE SCALE ANALYSIS] AT SER-12 AND SER-2195</scope>
    <scope>IDENTIFICATION BY MASS SPECTROMETRY [LARGE SCALE ANALYSIS]</scope>
    <source>
        <tissue>Cervix carcinoma</tissue>
        <tissue>Erythroleukemia</tissue>
    </source>
</reference>
<reference key="13">
    <citation type="journal article" date="2014" name="J. Proteomics">
        <title>An enzyme assisted RP-RPLC approach for in-depth analysis of human liver phosphoproteome.</title>
        <authorList>
            <person name="Bian Y."/>
            <person name="Song C."/>
            <person name="Cheng K."/>
            <person name="Dong M."/>
            <person name="Wang F."/>
            <person name="Huang J."/>
            <person name="Sun D."/>
            <person name="Wang L."/>
            <person name="Ye M."/>
            <person name="Zou H."/>
        </authorList>
    </citation>
    <scope>IDENTIFICATION BY MASS SPECTROMETRY [LARGE SCALE ANALYSIS]</scope>
    <source>
        <tissue>Liver</tissue>
    </source>
</reference>
<reference key="14">
    <citation type="journal article" date="2017" name="Nature">
        <title>A ubiquitin-dependent signalling axis specific for ALKBH-mediated DNA dealkylation repair.</title>
        <authorList>
            <person name="Brickner J.R."/>
            <person name="Soll J.M."/>
            <person name="Lombardi P.M."/>
            <person name="Vaagboe C.B."/>
            <person name="Mudge M.C."/>
            <person name="Oyeniran C."/>
            <person name="Rabe R."/>
            <person name="Jackson J."/>
            <person name="Sullender M.E."/>
            <person name="Blazosky E."/>
            <person name="Byrum A.K."/>
            <person name="Zhao Y."/>
            <person name="Corbett M.A."/>
            <person name="Gecz J."/>
            <person name="Field M."/>
            <person name="Vindigni A."/>
            <person name="Slupphaug G."/>
            <person name="Wolberger C."/>
            <person name="Mosammaparast N."/>
        </authorList>
    </citation>
    <scope>SUBCELLULAR LOCATION</scope>
    <scope>IDENTIFICATION BY MASS SPECTROMETRY</scope>
    <scope>IDENTIFICATION IN A COMPLEX WITH ASCC1 AND ASCC2</scope>
    <scope>INTERACTION WITH ASCC2 AND ALKBH3</scope>
</reference>
<reference key="15">
    <citation type="journal article" date="2017" name="Nat. Commun.">
        <title>Ubiquitination of stalled ribosome triggers ribosome-associated quality control.</title>
        <authorList>
            <person name="Matsuo Y."/>
            <person name="Ikeuchi K."/>
            <person name="Saeki Y."/>
            <person name="Iwasaki S."/>
            <person name="Schmidt C."/>
            <person name="Udagawa T."/>
            <person name="Sato F."/>
            <person name="Tsuchiya H."/>
            <person name="Becker T."/>
            <person name="Tanaka K."/>
            <person name="Ingolia N.T."/>
            <person name="Beckmann R."/>
            <person name="Inada T."/>
        </authorList>
    </citation>
    <scope>FUNCTION</scope>
    <scope>INTERACTION WITH ZNF598 AND RPS3</scope>
    <scope>SUBCELLULAR LOCATION</scope>
</reference>
<reference key="16">
    <citation type="journal article" date="2018" name="J. Biol. Chem.">
        <title>RNA ligase-like domain in activating signal cointegrator 1 complex subunit 1 (ASCC1) regulates ASCC complex function during alkylation damage.</title>
        <authorList>
            <person name="Soll J.M."/>
            <person name="Brickner J.R."/>
            <person name="Mudge M.C."/>
            <person name="Mosammaparast N."/>
        </authorList>
    </citation>
    <scope>INTERACTION WITH ASCC1 AND ASCC2</scope>
    <scope>IDENTIFICATION IN THE ASCC COMPLEX</scope>
    <scope>SUBCELLULAR LOCATION</scope>
</reference>
<reference key="17">
    <citation type="journal article" date="2020" name="Nucleic Acids Res.">
        <title>The human methyltransferase ZCCHC4 catalyses N6-methyladenosine modification of 28S ribosomal RNA.</title>
        <authorList>
            <person name="Pinto R."/>
            <person name="Vaagboe C.B."/>
            <person name="Jakobsson M.E."/>
            <person name="Kim Y."/>
            <person name="Baltissen M.P."/>
            <person name="O'Donohue M.F."/>
            <person name="Guzman U.H."/>
            <person name="Malecki J.M."/>
            <person name="Wu J."/>
            <person name="Kirpekar F."/>
            <person name="Olsen J.V."/>
            <person name="Gleizes P.E."/>
            <person name="Vermeulen M."/>
            <person name="Leidel S.A."/>
            <person name="Slupphaug G."/>
            <person name="Falnes P.O."/>
        </authorList>
    </citation>
    <scope>INTERACTION WITH ZCCHC4</scope>
</reference>
<reference key="18">
    <citation type="journal article" date="2020" name="Mol. Cell">
        <title>The ASC-1 complex disassembles collided ribosomes.</title>
        <authorList>
            <person name="Juszkiewicz S."/>
            <person name="Speldewinde S.H."/>
            <person name="Wan L."/>
            <person name="Svejstrup J.Q."/>
            <person name="Hegde R.S."/>
        </authorList>
    </citation>
    <scope>FUNCTION</scope>
    <scope>CATALYTIC ACTIVITY</scope>
    <scope>IDENTIFICATION IN THE RQT COMPLEX</scope>
    <scope>MUTAGENESIS OF LYS-505</scope>
</reference>
<reference key="19">
    <citation type="journal article" date="2020" name="Sci. Rep.">
        <title>Identification of a novel trigger complex that facilitates ribosome-associated quality control in mammalian cells.</title>
        <authorList>
            <person name="Hashimoto S."/>
            <person name="Sugiyama T."/>
            <person name="Yamazaki R."/>
            <person name="Nobuta R."/>
            <person name="Inada T."/>
        </authorList>
    </citation>
    <scope>FUNCTION</scope>
    <scope>IDENTIFICATION IN THE RQT COMPLEX</scope>
    <scope>MUTAGENESIS OF LYS-505</scope>
</reference>
<reference key="20">
    <citation type="journal article" date="2022" name="Nat. Commun.">
        <title>A distinct mammalian disome collision interface harbors K63-linked polyubiquitination of uS10 to trigger hRQT-mediated subunit dissociation.</title>
        <authorList>
            <person name="Narita M."/>
            <person name="Denk T."/>
            <person name="Matsuo Y."/>
            <person name="Sugiyama T."/>
            <person name="Kikuguchi C."/>
            <person name="Ito S."/>
            <person name="Sato N."/>
            <person name="Suzuki T."/>
            <person name="Hashimoto S."/>
            <person name="Machova I."/>
            <person name="Tesina P."/>
            <person name="Beckmann R."/>
            <person name="Inada T."/>
        </authorList>
    </citation>
    <scope>FUNCTION</scope>
    <scope>CATALYTIC ACTIVITY</scope>
    <scope>IDENTIFICATION IN THE RQT COMPLEX</scope>
    <scope>MUTAGENESIS OF LYS-505</scope>
</reference>
<reference key="21">
    <citation type="journal article" date="2011" name="Nature">
        <title>Deep sequencing reveals 50 novel genes for recessive cognitive disorders.</title>
        <authorList>
            <person name="Najmabadi H."/>
            <person name="Hu H."/>
            <person name="Garshasbi M."/>
            <person name="Zemojtel T."/>
            <person name="Abedini S.S."/>
            <person name="Chen W."/>
            <person name="Hosseini M."/>
            <person name="Behjati F."/>
            <person name="Haas S."/>
            <person name="Jamali P."/>
            <person name="Zecha A."/>
            <person name="Mohseni M."/>
            <person name="Puettmann L."/>
            <person name="Vahid L.N."/>
            <person name="Jensen C."/>
            <person name="Moheb L.A."/>
            <person name="Bienek M."/>
            <person name="Larti F."/>
            <person name="Mueller I."/>
            <person name="Weissmann R."/>
            <person name="Darvish H."/>
            <person name="Wrogemann K."/>
            <person name="Hadavi V."/>
            <person name="Lipkowitz B."/>
            <person name="Esmaeeli-Nieh S."/>
            <person name="Wieczorek D."/>
            <person name="Kariminejad R."/>
            <person name="Firouzabadi S.G."/>
            <person name="Cohen M."/>
            <person name="Fattahi Z."/>
            <person name="Rost I."/>
            <person name="Mojahedi F."/>
            <person name="Hertzberg C."/>
            <person name="Dehghan A."/>
            <person name="Rajab A."/>
            <person name="Banavandi M.J."/>
            <person name="Hoffer J."/>
            <person name="Falah M."/>
            <person name="Musante L."/>
            <person name="Kalscheuer V."/>
            <person name="Ullmann R."/>
            <person name="Kuss A.W."/>
            <person name="Tzschach A."/>
            <person name="Kahrizi K."/>
            <person name="Ropers H.H."/>
        </authorList>
    </citation>
    <scope>VARIANT MRT81 PRO-1564</scope>
    <scope>INVOLVEMENT IN MRT81</scope>
</reference>
<reference key="22">
    <citation type="journal article" date="2021" name="HGG Adv.">
        <title>Discovery of a neuromuscular syndrome caused by biallelic variants in ASCC3.</title>
        <authorList>
            <person name="Nair D."/>
            <person name="Li D."/>
            <person name="Erdogan H."/>
            <person name="Yoon A."/>
            <person name="Harr M.H."/>
            <person name="Bergant G."/>
            <person name="Peterlin B."/>
            <person name="Skrjanec Pusenjak M."/>
            <person name="Jayakar P."/>
            <person name="Pfundt R."/>
            <person name="Jansen S."/>
            <person name="McWalter K."/>
            <person name="Sidhu A."/>
            <person name="Saliganan S."/>
            <person name="Agolini E."/>
            <person name="Jacob A."/>
            <person name="Pasquier J."/>
            <person name="Arash R."/>
            <person name="Kahrizi K."/>
            <person name="Najmabadi H."/>
            <person name="Ropers H.H."/>
            <person name="Bhoj E.J."/>
        </authorList>
    </citation>
    <scope>VARIANTS MRT81 1211-GLN--LYS-2202 DEL; MET-1427; GLN-1472; HIS-1518; ASP-1652; PHE-1662; 1761-ARG--LYS-2202 DEL AND ARG-1898</scope>
    <scope>INVOLVEMENT IN MRT81</scope>
</reference>
<reference key="23">
    <citation type="journal article" date="2022" name="HGG Adv.">
        <authorList>
            <person name="Nair D."/>
            <person name="Li D."/>
            <person name="Erdogan H."/>
            <person name="Yoon A."/>
            <person name="Harr M.H."/>
            <person name="Bergant G."/>
            <person name="Peterlin B."/>
            <person name="Pusenjak M.S."/>
            <person name="Jayakar P."/>
            <person name="Pfundt R."/>
            <person name="Jansen S."/>
            <person name="McWalter K."/>
            <person name="Sidhu A."/>
            <person name="Saliganan S."/>
            <person name="Agolini E."/>
            <person name="Jacob A."/>
            <person name="Pasquier J."/>
            <person name="Arash R."/>
            <person name="Kahrizi K."/>
            <person name="Najmabadi H."/>
            <person name="Ropers H.H."/>
            <person name="Bhoj E.J."/>
        </authorList>
    </citation>
    <scope>ERRATUM OF PUBMED:35047834</scope>
</reference>
<evidence type="ECO:0000255" key="1"/>
<evidence type="ECO:0000255" key="2">
    <source>
        <dbReference type="PROSITE-ProRule" id="PRU00541"/>
    </source>
</evidence>
<evidence type="ECO:0000255" key="3">
    <source>
        <dbReference type="PROSITE-ProRule" id="PRU00542"/>
    </source>
</evidence>
<evidence type="ECO:0000269" key="4">
    <source>
    </source>
</evidence>
<evidence type="ECO:0000269" key="5">
    <source>
    </source>
</evidence>
<evidence type="ECO:0000269" key="6">
    <source>
    </source>
</evidence>
<evidence type="ECO:0000269" key="7">
    <source>
    </source>
</evidence>
<evidence type="ECO:0000269" key="8">
    <source>
    </source>
</evidence>
<evidence type="ECO:0000269" key="9">
    <source>
    </source>
</evidence>
<evidence type="ECO:0000269" key="10">
    <source>
    </source>
</evidence>
<evidence type="ECO:0000269" key="11">
    <source>
    </source>
</evidence>
<evidence type="ECO:0000269" key="12">
    <source>
    </source>
</evidence>
<evidence type="ECO:0000269" key="13">
    <source>
    </source>
</evidence>
<evidence type="ECO:0000269" key="14">
    <source>
    </source>
</evidence>
<evidence type="ECO:0000269" key="15">
    <source>
    </source>
</evidence>
<evidence type="ECO:0000269" key="16">
    <source ref="7"/>
</evidence>
<evidence type="ECO:0000303" key="17">
    <source>
    </source>
</evidence>
<evidence type="ECO:0000303" key="18">
    <source>
    </source>
</evidence>
<evidence type="ECO:0000303" key="19">
    <source>
    </source>
</evidence>
<evidence type="ECO:0000303" key="20">
    <source>
    </source>
</evidence>
<evidence type="ECO:0000305" key="21"/>
<evidence type="ECO:0000305" key="22">
    <source>
    </source>
</evidence>
<evidence type="ECO:0007744" key="23">
    <source>
    </source>
</evidence>
<evidence type="ECO:0007744" key="24">
    <source>
    </source>
</evidence>
<evidence type="ECO:0007829" key="25">
    <source>
        <dbReference type="PDB" id="6YXQ"/>
    </source>
</evidence>
<evidence type="ECO:0007829" key="26">
    <source>
        <dbReference type="PDB" id="8ALZ"/>
    </source>
</evidence>
<name>ASCC3_HUMAN</name>